<feature type="chain" id="PRO_0000405226" description="Genome polyprotein">
    <location>
        <begin position="1"/>
        <end position="3386"/>
    </location>
</feature>
<feature type="chain" id="PRO_0000038000" description="Capsid protein C" evidence="6">
    <location>
        <begin position="1"/>
        <end position="99"/>
    </location>
</feature>
<feature type="propeptide" id="PRO_0000038001" description="ER anchor for the capsid protein C, removed in mature form by serine protease NS3" evidence="6">
    <location>
        <begin position="100"/>
        <end position="113"/>
    </location>
</feature>
<feature type="chain" id="PRO_0000308297" description="Protein prM" evidence="18">
    <location>
        <begin position="114"/>
        <end position="279"/>
    </location>
</feature>
<feature type="chain" id="PRO_0000308298" description="Peptide pr" evidence="6">
    <location>
        <begin position="114"/>
        <end position="204"/>
    </location>
</feature>
<feature type="chain" id="PRO_0000038002" description="Small envelope protein M" evidence="6">
    <location>
        <begin position="205"/>
        <end position="279"/>
    </location>
</feature>
<feature type="chain" id="PRO_0000038003" description="Envelope protein E" evidence="6">
    <location>
        <begin position="280"/>
        <end position="774"/>
    </location>
</feature>
<feature type="chain" id="PRO_0000038004" description="Non-structural protein 1" evidence="6">
    <location>
        <begin position="775"/>
        <end position="1126"/>
    </location>
</feature>
<feature type="chain" id="PRO_0000038005" description="Non-structural protein 2A" evidence="6">
    <location>
        <begin position="1127"/>
        <end position="1344"/>
    </location>
</feature>
<feature type="chain" id="PRO_0000038006" description="Serine protease subunit NS2B" evidence="6">
    <location>
        <begin position="1345"/>
        <end position="1474"/>
    </location>
</feature>
<feature type="chain" id="PRO_0000038007" description="Serine protease NS3" evidence="6">
    <location>
        <begin position="1475"/>
        <end position="2092"/>
    </location>
</feature>
<feature type="chain" id="PRO_0000038008" description="Non-structural protein 4A" evidence="6">
    <location>
        <begin position="2093"/>
        <end position="2219"/>
    </location>
</feature>
<feature type="peptide" id="PRO_0000308300" description="Peptide 2k" evidence="6">
    <location>
        <begin position="2220"/>
        <end position="2242"/>
    </location>
</feature>
<feature type="chain" id="PRO_0000038009" description="Non-structural protein 4B" evidence="6">
    <location>
        <begin position="2243"/>
        <end position="2487"/>
    </location>
</feature>
<feature type="chain" id="PRO_0000038010" description="RNA-directed RNA polymerase NS5" evidence="6">
    <location>
        <begin position="2488"/>
        <end position="3387"/>
    </location>
</feature>
<feature type="topological domain" description="Cytoplasmic" evidence="11">
    <location>
        <begin position="1"/>
        <end position="100"/>
    </location>
</feature>
<feature type="transmembrane region" description="Helical" evidence="11">
    <location>
        <begin position="101"/>
        <end position="117"/>
    </location>
</feature>
<feature type="topological domain" description="Extracellular" evidence="11">
    <location>
        <begin position="118"/>
        <end position="237"/>
    </location>
</feature>
<feature type="transmembrane region" description="Helical" evidence="11">
    <location>
        <begin position="238"/>
        <end position="258"/>
    </location>
</feature>
<feature type="topological domain" description="Cytoplasmic" evidence="11">
    <location>
        <begin position="259"/>
        <end position="265"/>
    </location>
</feature>
<feature type="transmembrane region" description="Helical" evidence="11">
    <location>
        <begin position="266"/>
        <end position="279"/>
    </location>
</feature>
<feature type="topological domain" description="Extracellular" evidence="11">
    <location>
        <begin position="280"/>
        <end position="725"/>
    </location>
</feature>
<feature type="transmembrane region" description="Helical" evidence="11">
    <location>
        <begin position="726"/>
        <end position="746"/>
    </location>
</feature>
<feature type="topological domain" description="Cytoplasmic" evidence="11">
    <location>
        <begin position="747"/>
        <end position="751"/>
    </location>
</feature>
<feature type="transmembrane region" description="Helical" evidence="11">
    <location>
        <begin position="752"/>
        <end position="772"/>
    </location>
</feature>
<feature type="topological domain" description="Extracellular" evidence="11">
    <location>
        <begin position="773"/>
        <end position="1194"/>
    </location>
</feature>
<feature type="transmembrane region" description="Helical" evidence="11">
    <location>
        <begin position="1195"/>
        <end position="1218"/>
    </location>
</feature>
<feature type="topological domain" description="Lumenal" evidence="11">
    <location>
        <begin position="1219"/>
        <end position="1224"/>
    </location>
</feature>
<feature type="transmembrane region" description="Helical" evidence="11">
    <location>
        <begin position="1225"/>
        <end position="1243"/>
    </location>
</feature>
<feature type="topological domain" description="Cytoplasmic" evidence="11">
    <location>
        <begin position="1244"/>
        <end position="1267"/>
    </location>
</feature>
<feature type="transmembrane region" description="Helical" evidence="11">
    <location>
        <begin position="1268"/>
        <end position="1288"/>
    </location>
</feature>
<feature type="topological domain" description="Lumenal" evidence="11">
    <location>
        <position position="1289"/>
    </location>
</feature>
<feature type="transmembrane region" description="Helical" evidence="11">
    <location>
        <begin position="1290"/>
        <end position="1308"/>
    </location>
</feature>
<feature type="topological domain" description="Lumenal" evidence="11">
    <location>
        <begin position="1309"/>
        <end position="1316"/>
    </location>
</feature>
<feature type="transmembrane region" description="Helical" evidence="11">
    <location>
        <begin position="1317"/>
        <end position="1337"/>
    </location>
</feature>
<feature type="topological domain" description="Cytoplasmic" evidence="11">
    <location>
        <begin position="1338"/>
        <end position="1345"/>
    </location>
</feature>
<feature type="transmembrane region" description="Helical" evidence="11">
    <location>
        <begin position="1346"/>
        <end position="1366"/>
    </location>
</feature>
<feature type="topological domain" description="Lumenal" evidence="11">
    <location>
        <begin position="1367"/>
        <end position="1369"/>
    </location>
</feature>
<feature type="transmembrane region" description="Helical" evidence="11">
    <location>
        <begin position="1370"/>
        <end position="1390"/>
    </location>
</feature>
<feature type="topological domain" description="Cytoplasmic" evidence="11">
    <location>
        <begin position="1391"/>
        <end position="1437"/>
    </location>
</feature>
<feature type="intramembrane region" description="Helical" evidence="11">
    <location>
        <begin position="1438"/>
        <end position="1458"/>
    </location>
</feature>
<feature type="topological domain" description="Cytoplasmic" evidence="11">
    <location>
        <begin position="1459"/>
        <end position="2143"/>
    </location>
</feature>
<feature type="transmembrane region" description="Helical" evidence="11">
    <location>
        <begin position="2144"/>
        <end position="2164"/>
    </location>
</feature>
<feature type="topological domain" description="Lumenal" evidence="11">
    <location>
        <begin position="2165"/>
        <end position="2169"/>
    </location>
</feature>
<feature type="intramembrane region" description="Helical" evidence="11">
    <location>
        <begin position="2170"/>
        <end position="2190"/>
    </location>
</feature>
<feature type="topological domain" description="Lumenal" evidence="11">
    <location>
        <position position="2191"/>
    </location>
</feature>
<feature type="transmembrane region" description="Helical" evidence="11">
    <location>
        <begin position="2192"/>
        <end position="2212"/>
    </location>
</feature>
<feature type="topological domain" description="Cytoplasmic" evidence="11">
    <location>
        <begin position="2213"/>
        <end position="2225"/>
    </location>
</feature>
<feature type="transmembrane region" description="Helical; Note=Signal for NS4B" evidence="11">
    <location>
        <begin position="2226"/>
        <end position="2246"/>
    </location>
</feature>
<feature type="topological domain" description="Lumenal" evidence="11">
    <location>
        <begin position="2247"/>
        <end position="2270"/>
    </location>
</feature>
<feature type="intramembrane region" description="Helical" evidence="11">
    <location>
        <begin position="2271"/>
        <end position="2291"/>
    </location>
</feature>
<feature type="topological domain" description="Lumenal" evidence="11">
    <location>
        <begin position="2292"/>
        <end position="2301"/>
    </location>
</feature>
<feature type="intramembrane region" description="Helical" evidence="11">
    <location>
        <begin position="2302"/>
        <end position="2322"/>
    </location>
</feature>
<feature type="topological domain" description="Lumenal" evidence="11">
    <location>
        <begin position="2323"/>
        <end position="2343"/>
    </location>
</feature>
<feature type="transmembrane region" description="Helical" evidence="11">
    <location>
        <begin position="2344"/>
        <end position="2364"/>
    </location>
</feature>
<feature type="topological domain" description="Cytoplasmic" evidence="11">
    <location>
        <begin position="2365"/>
        <end position="2409"/>
    </location>
</feature>
<feature type="transmembrane region" description="Helical" evidence="11">
    <location>
        <begin position="2410"/>
        <end position="2430"/>
    </location>
</feature>
<feature type="topological domain" description="Lumenal" evidence="11">
    <location>
        <begin position="2431"/>
        <end position="2455"/>
    </location>
</feature>
<feature type="transmembrane region" description="Helical" evidence="11">
    <location>
        <begin position="2456"/>
        <end position="2476"/>
    </location>
</feature>
<feature type="topological domain" description="Cytoplasmic" evidence="11">
    <location>
        <begin position="2477"/>
        <end position="3387"/>
    </location>
</feature>
<feature type="domain" description="Peptidase S7" evidence="16">
    <location>
        <begin position="1475"/>
        <end position="1652"/>
    </location>
</feature>
<feature type="domain" description="Helicase ATP-binding" evidence="14">
    <location>
        <begin position="1654"/>
        <end position="1810"/>
    </location>
</feature>
<feature type="domain" description="Helicase C-terminal">
    <location>
        <begin position="1820"/>
        <end position="1987"/>
    </location>
</feature>
<feature type="domain" description="mRNA cap 0-1 NS5-type MT" evidence="17">
    <location>
        <begin position="2489"/>
        <end position="2751"/>
    </location>
</feature>
<feature type="domain" description="RdRp catalytic" evidence="13">
    <location>
        <begin position="3016"/>
        <end position="3166"/>
    </location>
</feature>
<feature type="region of interest" description="Hydrophobic; homodimerization of capsid protein C" evidence="6">
    <location>
        <begin position="36"/>
        <end position="71"/>
    </location>
</feature>
<feature type="region of interest" description="Fusion peptide" evidence="3">
    <location>
        <begin position="377"/>
        <end position="390"/>
    </location>
</feature>
<feature type="region of interest" description="Interacts with and activates NS3 protease" evidence="15">
    <location>
        <begin position="1397"/>
        <end position="1436"/>
    </location>
</feature>
<feature type="region of interest" description="Important for RNA-binding" evidence="4">
    <location>
        <begin position="1658"/>
        <end position="1661"/>
    </location>
</feature>
<feature type="short sequence motif" description="DEAH box" evidence="14">
    <location>
        <begin position="1758"/>
        <end position="1761"/>
    </location>
</feature>
<feature type="short sequence motif" description="SUMO-interacting motif" evidence="6">
    <location>
        <begin position="2564"/>
        <end position="2567"/>
    </location>
</feature>
<feature type="active site" description="Charge relay system; for serine protease NS3 activity" evidence="16">
    <location>
        <position position="1525"/>
    </location>
</feature>
<feature type="active site" description="Charge relay system; for serine protease NS3 activity" evidence="16">
    <location>
        <position position="1549"/>
    </location>
</feature>
<feature type="active site" description="Charge relay system; for serine protease NS3 activity" evidence="16">
    <location>
        <position position="1609"/>
    </location>
</feature>
<feature type="active site" description="For 2'-O-MTase activity" evidence="9">
    <location>
        <position position="2548"/>
    </location>
</feature>
<feature type="active site" description="For 2'-O-MTase activity" evidence="9">
    <location>
        <position position="2633"/>
    </location>
</feature>
<feature type="active site" description="For 2'-O-MTase activity" evidence="9">
    <location>
        <position position="2668"/>
    </location>
</feature>
<feature type="active site" description="For 2'-O-MTase activity" evidence="9">
    <location>
        <position position="2704"/>
    </location>
</feature>
<feature type="binding site" evidence="14">
    <location>
        <begin position="1667"/>
        <end position="1674"/>
    </location>
    <ligand>
        <name>ATP</name>
        <dbReference type="ChEBI" id="CHEBI:30616"/>
    </ligand>
</feature>
<feature type="binding site" evidence="17">
    <location>
        <position position="2543"/>
    </location>
    <ligand>
        <name>S-adenosyl-L-methionine</name>
        <dbReference type="ChEBI" id="CHEBI:59789"/>
    </ligand>
</feature>
<feature type="binding site" evidence="17">
    <location>
        <position position="2573"/>
    </location>
    <ligand>
        <name>S-adenosyl-L-methionine</name>
        <dbReference type="ChEBI" id="CHEBI:59789"/>
    </ligand>
</feature>
<feature type="binding site" evidence="17">
    <location>
        <position position="2574"/>
    </location>
    <ligand>
        <name>S-adenosyl-L-methionine</name>
        <dbReference type="ChEBI" id="CHEBI:59789"/>
    </ligand>
</feature>
<feature type="binding site" evidence="17">
    <location>
        <position position="2591"/>
    </location>
    <ligand>
        <name>S-adenosyl-L-methionine</name>
        <dbReference type="ChEBI" id="CHEBI:59789"/>
    </ligand>
</feature>
<feature type="binding site" evidence="17">
    <location>
        <position position="2592"/>
    </location>
    <ligand>
        <name>S-adenosyl-L-methionine</name>
        <dbReference type="ChEBI" id="CHEBI:59789"/>
    </ligand>
</feature>
<feature type="binding site" evidence="17">
    <location>
        <position position="2618"/>
    </location>
    <ligand>
        <name>S-adenosyl-L-methionine</name>
        <dbReference type="ChEBI" id="CHEBI:59789"/>
    </ligand>
</feature>
<feature type="binding site" evidence="17">
    <location>
        <position position="2619"/>
    </location>
    <ligand>
        <name>S-adenosyl-L-methionine</name>
        <dbReference type="ChEBI" id="CHEBI:59789"/>
    </ligand>
</feature>
<feature type="binding site" evidence="17">
    <location>
        <position position="2634"/>
    </location>
    <ligand>
        <name>S-adenosyl-L-methionine</name>
        <dbReference type="ChEBI" id="CHEBI:59789"/>
    </ligand>
</feature>
<feature type="binding site" evidence="17">
    <location>
        <position position="2706"/>
    </location>
    <ligand>
        <name>S-adenosyl-L-methionine</name>
        <dbReference type="ChEBI" id="CHEBI:59789"/>
    </ligand>
</feature>
<feature type="binding site" evidence="9">
    <location>
        <position position="2925"/>
    </location>
    <ligand>
        <name>Zn(2+)</name>
        <dbReference type="ChEBI" id="CHEBI:29105"/>
        <label>1</label>
    </ligand>
</feature>
<feature type="binding site" evidence="9">
    <location>
        <position position="2929"/>
    </location>
    <ligand>
        <name>Zn(2+)</name>
        <dbReference type="ChEBI" id="CHEBI:29105"/>
        <label>1</label>
    </ligand>
</feature>
<feature type="binding site" evidence="9">
    <location>
        <position position="2934"/>
    </location>
    <ligand>
        <name>Zn(2+)</name>
        <dbReference type="ChEBI" id="CHEBI:29105"/>
        <label>1</label>
    </ligand>
</feature>
<feature type="binding site" evidence="9">
    <location>
        <position position="2937"/>
    </location>
    <ligand>
        <name>Zn(2+)</name>
        <dbReference type="ChEBI" id="CHEBI:29105"/>
        <label>1</label>
    </ligand>
</feature>
<feature type="binding site" evidence="9">
    <location>
        <position position="3200"/>
    </location>
    <ligand>
        <name>Zn(2+)</name>
        <dbReference type="ChEBI" id="CHEBI:29105"/>
        <label>2</label>
    </ligand>
</feature>
<feature type="binding site" evidence="9">
    <location>
        <position position="3216"/>
    </location>
    <ligand>
        <name>Zn(2+)</name>
        <dbReference type="ChEBI" id="CHEBI:29105"/>
        <label>2</label>
    </ligand>
</feature>
<feature type="binding site" evidence="9">
    <location>
        <position position="3335"/>
    </location>
    <ligand>
        <name>Zn(2+)</name>
        <dbReference type="ChEBI" id="CHEBI:29105"/>
        <label>2</label>
    </ligand>
</feature>
<feature type="site" description="Cleavage; by viral protease NS3" evidence="6">
    <location>
        <begin position="99"/>
        <end position="100"/>
    </location>
</feature>
<feature type="site" description="Cleavage; by host signal peptidase" evidence="18">
    <location>
        <begin position="113"/>
        <end position="114"/>
    </location>
</feature>
<feature type="site" description="Cleavage; by host furin" evidence="6 11">
    <location>
        <begin position="204"/>
        <end position="205"/>
    </location>
</feature>
<feature type="site" description="Cleavage; by host signal peptidase" evidence="6">
    <location>
        <begin position="279"/>
        <end position="280"/>
    </location>
</feature>
<feature type="site" description="Cleavage; by host signal peptidase" evidence="6">
    <location>
        <begin position="774"/>
        <end position="775"/>
    </location>
</feature>
<feature type="site" description="Cleavage; by host" evidence="6">
    <location>
        <begin position="1126"/>
        <end position="1127"/>
    </location>
</feature>
<feature type="site" description="Cleavage; by viral protease NS3" evidence="6">
    <location>
        <begin position="1344"/>
        <end position="1345"/>
    </location>
</feature>
<feature type="site" description="Cleavage; by autolysis" evidence="6">
    <location>
        <begin position="1474"/>
        <end position="1475"/>
    </location>
</feature>
<feature type="site" description="Involved in NS3 ATPase and RTPase activities" evidence="2">
    <location>
        <position position="1931"/>
    </location>
</feature>
<feature type="site" description="Involved in NS3 ATPase and RTPase activities" evidence="2">
    <location>
        <position position="1934"/>
    </location>
</feature>
<feature type="site" description="Cleavage; by autolysis" evidence="6">
    <location>
        <begin position="2092"/>
        <end position="2093"/>
    </location>
</feature>
<feature type="site" description="Cleavage; by viral protease NS3" evidence="6">
    <location>
        <begin position="2219"/>
        <end position="2220"/>
    </location>
</feature>
<feature type="site" description="Cleavage; by host signal peptidase" evidence="6">
    <location>
        <begin position="2242"/>
        <end position="2243"/>
    </location>
</feature>
<feature type="site" description="Cleavage; by viral protease NS3" evidence="6">
    <location>
        <begin position="2487"/>
        <end position="2488"/>
    </location>
</feature>
<feature type="site" description="mRNA cap binding" evidence="17">
    <location>
        <position position="2501"/>
    </location>
</feature>
<feature type="site" description="mRNA cap binding; via carbonyl oxygen" evidence="17">
    <location>
        <position position="2504"/>
    </location>
</feature>
<feature type="site" description="mRNA cap binding" evidence="17">
    <location>
        <position position="2505"/>
    </location>
</feature>
<feature type="site" description="mRNA cap binding; via carbonyl oxygen" evidence="17">
    <location>
        <position position="2507"/>
    </location>
</feature>
<feature type="site" description="mRNA cap binding" evidence="17">
    <location>
        <position position="2512"/>
    </location>
</feature>
<feature type="site" description="mRNA cap binding" evidence="17">
    <location>
        <position position="2516"/>
    </location>
</feature>
<feature type="site" description="Essential for 2'-O-methyltransferase activity" evidence="17">
    <location>
        <position position="2548"/>
    </location>
</feature>
<feature type="site" description="Essential for 2'-O-methyltransferase and N-7 methyltransferase activity" evidence="17">
    <location>
        <position position="2633"/>
    </location>
</feature>
<feature type="site" description="mRNA cap binding" evidence="17">
    <location>
        <position position="2637"/>
    </location>
</feature>
<feature type="site" description="Essential for 2'-O-methyltransferase activity" evidence="17">
    <location>
        <position position="2668"/>
    </location>
</feature>
<feature type="site" description="mRNA cap binding" evidence="17">
    <location>
        <position position="2699"/>
    </location>
</feature>
<feature type="site" description="mRNA cap binding" evidence="17">
    <location>
        <position position="2701"/>
    </location>
</feature>
<feature type="site" description="Essential for 2'-O-methyltransferase activity" evidence="17">
    <location>
        <position position="2704"/>
    </location>
</feature>
<feature type="modified residue" description="N6-acetyllysine; by host" evidence="8">
    <location>
        <position position="1862"/>
    </location>
</feature>
<feature type="modified residue" description="Phosphoserine" evidence="1">
    <location>
        <position position="2543"/>
    </location>
</feature>
<feature type="glycosylation site" description="N-linked (GlcNAc...) asparagine; by host" evidence="12">
    <location>
        <position position="182"/>
    </location>
</feature>
<feature type="glycosylation site" description="N-linked (GlcNAc...) asparagine; by host" evidence="12">
    <location>
        <position position="346"/>
    </location>
</feature>
<feature type="glycosylation site" description="N-linked (GlcNAc...) asparagine; by host" evidence="12">
    <location>
        <position position="432"/>
    </location>
</feature>
<feature type="glycosylation site" description="N-linked (GlcNAc...) asparagine; by host" evidence="12">
    <location>
        <position position="904"/>
    </location>
</feature>
<feature type="glycosylation site" description="N-linked (GlcNAc...) asparagine; by host" evidence="12">
    <location>
        <position position="981"/>
    </location>
</feature>
<feature type="glycosylation site" description="N-linked (GlcNAc...) asparagine; by host" evidence="12">
    <location>
        <position position="2297"/>
    </location>
</feature>
<feature type="glycosylation site" description="N-linked (GlcNAc...) asparagine; by host" evidence="12">
    <location>
        <position position="2301"/>
    </location>
</feature>
<feature type="glycosylation site" description="N-linked (GlcNAc...) asparagine; by host" evidence="12">
    <location>
        <position position="2453"/>
    </location>
</feature>
<feature type="disulfide bond" evidence="5">
    <location>
        <begin position="282"/>
        <end position="309"/>
    </location>
</feature>
<feature type="disulfide bond" evidence="5">
    <location>
        <begin position="339"/>
        <end position="400"/>
    </location>
</feature>
<feature type="disulfide bond" evidence="5">
    <location>
        <begin position="353"/>
        <end position="384"/>
    </location>
</feature>
<feature type="disulfide bond" evidence="5">
    <location>
        <begin position="371"/>
        <end position="395"/>
    </location>
</feature>
<feature type="disulfide bond" evidence="5">
    <location>
        <begin position="464"/>
        <end position="564"/>
    </location>
</feature>
<feature type="disulfide bond" evidence="5">
    <location>
        <begin position="581"/>
        <end position="612"/>
    </location>
</feature>
<feature type="disulfide bond" evidence="5">
    <location>
        <begin position="778"/>
        <end position="789"/>
    </location>
</feature>
<feature type="disulfide bond" evidence="5">
    <location>
        <begin position="829"/>
        <end position="917"/>
    </location>
</feature>
<feature type="disulfide bond" evidence="5">
    <location>
        <begin position="953"/>
        <end position="997"/>
    </location>
</feature>
<feature type="disulfide bond" evidence="5">
    <location>
        <begin position="1054"/>
        <end position="1103"/>
    </location>
</feature>
<feature type="disulfide bond" evidence="5">
    <location>
        <begin position="1065"/>
        <end position="1087"/>
    </location>
</feature>
<feature type="disulfide bond" evidence="5">
    <location>
        <begin position="1086"/>
        <end position="1090"/>
    </location>
</feature>
<feature type="sequence conflict" description="In Ref. 2; AAG45436/AAK01233." evidence="20" ref="2">
    <original>A</original>
    <variation>V</variation>
    <location>
        <position position="780"/>
    </location>
</feature>
<feature type="sequence conflict" description="In Ref. 2; AAG45435." evidence="20" ref="2">
    <original>I</original>
    <variation>V</variation>
    <location>
        <position position="1418"/>
    </location>
</feature>
<feature type="sequence conflict" description="In Ref. 2; AAK01233." evidence="20" ref="2">
    <original>P</original>
    <variation>T</variation>
    <location>
        <position position="1909"/>
    </location>
</feature>
<feature type="sequence conflict" description="In Ref. 2; AAG45435." evidence="20" ref="2">
    <original>K</original>
    <variation>E</variation>
    <location>
        <position position="2032"/>
    </location>
</feature>
<feature type="sequence conflict" description="In Ref. 2; AAG45436." evidence="20" ref="2">
    <original>V</original>
    <variation>A</variation>
    <location>
        <position position="2351"/>
    </location>
</feature>
<feature type="sequence conflict" description="In Ref. 2; AAG45437." evidence="20" ref="2">
    <original>L</original>
    <variation>F</variation>
    <location>
        <position position="2354"/>
    </location>
</feature>
<feature type="sequence conflict" description="In Ref. 2; AAK01233." evidence="20" ref="2">
    <original>K</original>
    <variation>R</variation>
    <location>
        <position position="2510"/>
    </location>
</feature>
<feature type="sequence conflict" description="In Ref. 2; AAG45436." evidence="20" ref="2">
    <original>K</original>
    <variation>R</variation>
    <location>
        <position position="2736"/>
    </location>
</feature>
<feature type="strand" evidence="25">
    <location>
        <begin position="286"/>
        <end position="292"/>
    </location>
</feature>
<feature type="strand" evidence="25">
    <location>
        <begin position="300"/>
        <end position="305"/>
    </location>
</feature>
<feature type="strand" evidence="25">
    <location>
        <begin position="308"/>
        <end position="313"/>
    </location>
</feature>
<feature type="strand" evidence="25">
    <location>
        <begin position="320"/>
        <end position="329"/>
    </location>
</feature>
<feature type="strand" evidence="25">
    <location>
        <begin position="332"/>
        <end position="351"/>
    </location>
</feature>
<feature type="helix" evidence="25">
    <location>
        <begin position="362"/>
        <end position="364"/>
    </location>
</feature>
<feature type="strand" evidence="25">
    <location>
        <begin position="369"/>
        <end position="378"/>
    </location>
</feature>
<feature type="helix" evidence="25">
    <location>
        <begin position="380"/>
        <end position="382"/>
    </location>
</feature>
<feature type="strand" evidence="25">
    <location>
        <begin position="388"/>
        <end position="409"/>
    </location>
</feature>
<feature type="helix" evidence="25">
    <location>
        <begin position="411"/>
        <end position="413"/>
    </location>
</feature>
<feature type="strand" evidence="25">
    <location>
        <begin position="414"/>
        <end position="422"/>
    </location>
</feature>
<feature type="strand" evidence="25">
    <location>
        <begin position="439"/>
        <end position="443"/>
    </location>
</feature>
<feature type="strand" evidence="25">
    <location>
        <begin position="445"/>
        <end position="447"/>
    </location>
</feature>
<feature type="strand" evidence="25">
    <location>
        <begin position="449"/>
        <end position="454"/>
    </location>
</feature>
<feature type="turn" evidence="25">
    <location>
        <begin position="455"/>
        <end position="457"/>
    </location>
</feature>
<feature type="strand" evidence="25">
    <location>
        <begin position="458"/>
        <end position="465"/>
    </location>
</feature>
<feature type="strand" evidence="25">
    <location>
        <begin position="474"/>
        <end position="480"/>
    </location>
</feature>
<feature type="strand" evidence="25">
    <location>
        <begin position="483"/>
        <end position="488"/>
    </location>
</feature>
<feature type="helix" evidence="25">
    <location>
        <begin position="489"/>
        <end position="493"/>
    </location>
</feature>
<feature type="helix" evidence="25">
    <location>
        <begin position="513"/>
        <end position="515"/>
    </location>
</feature>
<feature type="strand" evidence="22">
    <location>
        <begin position="517"/>
        <end position="519"/>
    </location>
</feature>
<feature type="strand" evidence="25">
    <location>
        <begin position="522"/>
        <end position="524"/>
    </location>
</feature>
<feature type="strand" evidence="22">
    <location>
        <begin position="529"/>
        <end position="531"/>
    </location>
</feature>
<feature type="helix" evidence="25">
    <location>
        <begin position="536"/>
        <end position="542"/>
    </location>
</feature>
<feature type="strand" evidence="25">
    <location>
        <begin position="544"/>
        <end position="551"/>
    </location>
</feature>
<feature type="strand" evidence="25">
    <location>
        <begin position="553"/>
        <end position="558"/>
    </location>
</feature>
<feature type="strand" evidence="25">
    <location>
        <begin position="561"/>
        <end position="567"/>
    </location>
</feature>
<feature type="strand" evidence="21">
    <location>
        <begin position="570"/>
        <end position="572"/>
    </location>
</feature>
<feature type="turn" evidence="25">
    <location>
        <begin position="574"/>
        <end position="577"/>
    </location>
</feature>
<feature type="strand" evidence="24">
    <location>
        <begin position="585"/>
        <end position="593"/>
    </location>
</feature>
<feature type="strand" evidence="23">
    <location>
        <begin position="595"/>
        <end position="597"/>
    </location>
</feature>
<feature type="strand" evidence="24">
    <location>
        <begin position="599"/>
        <end position="605"/>
    </location>
</feature>
<feature type="strand" evidence="24">
    <location>
        <begin position="607"/>
        <end position="609"/>
    </location>
</feature>
<feature type="strand" evidence="24">
    <location>
        <begin position="611"/>
        <end position="613"/>
    </location>
</feature>
<feature type="strand" evidence="24">
    <location>
        <begin position="616"/>
        <end position="619"/>
    </location>
</feature>
<feature type="strand" evidence="23">
    <location>
        <begin position="621"/>
        <end position="623"/>
    </location>
</feature>
<feature type="strand" evidence="25">
    <location>
        <begin position="628"/>
        <end position="630"/>
    </location>
</feature>
<feature type="strand" evidence="24">
    <location>
        <begin position="632"/>
        <end position="634"/>
    </location>
</feature>
<feature type="strand" evidence="21">
    <location>
        <begin position="636"/>
        <end position="639"/>
    </location>
</feature>
<feature type="strand" evidence="24">
    <location>
        <begin position="643"/>
        <end position="648"/>
    </location>
</feature>
<feature type="strand" evidence="24">
    <location>
        <begin position="652"/>
        <end position="661"/>
    </location>
</feature>
<feature type="helix" evidence="24">
    <location>
        <begin position="662"/>
        <end position="664"/>
    </location>
</feature>
<feature type="strand" evidence="24">
    <location>
        <begin position="666"/>
        <end position="672"/>
    </location>
</feature>
<organism>
    <name type="scientific">Dengue virus type 4 (strain Dominica/814669/1981)</name>
    <name type="common">DENV-4</name>
    <dbReference type="NCBI Taxonomy" id="408871"/>
    <lineage>
        <taxon>Viruses</taxon>
        <taxon>Riboviria</taxon>
        <taxon>Orthornavirae</taxon>
        <taxon>Kitrinoviricota</taxon>
        <taxon>Flasuviricetes</taxon>
        <taxon>Amarillovirales</taxon>
        <taxon>Flaviviridae</taxon>
        <taxon>Orthoflavivirus</taxon>
        <taxon>Orthoflavivirus denguei</taxon>
        <taxon>Dengue virus</taxon>
    </lineage>
</organism>
<proteinExistence type="evidence at protein level"/>
<protein>
    <recommendedName>
        <fullName>Genome polyprotein</fullName>
    </recommendedName>
    <component>
        <recommendedName>
            <fullName>Capsid protein C</fullName>
        </recommendedName>
        <alternativeName>
            <fullName>Core protein</fullName>
        </alternativeName>
    </component>
    <component>
        <recommendedName>
            <fullName>Protein prM</fullName>
        </recommendedName>
    </component>
    <component>
        <recommendedName>
            <fullName>Peptide pr</fullName>
        </recommendedName>
    </component>
    <component>
        <recommendedName>
            <fullName>Small envelope protein M</fullName>
        </recommendedName>
        <alternativeName>
            <fullName>Matrix protein</fullName>
        </alternativeName>
    </component>
    <component>
        <recommendedName>
            <fullName>Envelope protein E</fullName>
        </recommendedName>
    </component>
    <component>
        <recommendedName>
            <fullName>Non-structural protein 1</fullName>
            <shortName>NS1</shortName>
        </recommendedName>
    </component>
    <component>
        <recommendedName>
            <fullName>Non-structural protein 2A</fullName>
            <shortName>NS2A</shortName>
        </recommendedName>
    </component>
    <component>
        <recommendedName>
            <fullName>Serine protease subunit NS2B</fullName>
        </recommendedName>
        <alternativeName>
            <fullName>Flavivirin protease NS2B regulatory subunit</fullName>
        </alternativeName>
        <alternativeName>
            <fullName>Non-structural protein 2B</fullName>
        </alternativeName>
    </component>
    <component>
        <recommendedName>
            <fullName>Serine protease NS3</fullName>
            <ecNumber>3.4.21.91</ecNumber>
            <ecNumber evidence="10">3.6.1.15</ecNumber>
            <ecNumber evidence="10">3.6.4.13</ecNumber>
        </recommendedName>
        <alternativeName>
            <fullName>Flavivirin protease NS3 catalytic subunit</fullName>
        </alternativeName>
        <alternativeName>
            <fullName>Non-structural protein 3</fullName>
        </alternativeName>
    </component>
    <component>
        <recommendedName>
            <fullName>Non-structural protein 4A</fullName>
            <shortName>NS4A</shortName>
        </recommendedName>
    </component>
    <component>
        <recommendedName>
            <fullName>Peptide 2k</fullName>
        </recommendedName>
    </component>
    <component>
        <recommendedName>
            <fullName>Non-structural protein 4B</fullName>
            <shortName>NS4B</shortName>
        </recommendedName>
    </component>
    <component>
        <recommendedName>
            <fullName>RNA-directed RNA polymerase NS5</fullName>
            <ecNumber evidence="17">2.1.1.56</ecNumber>
            <ecNumber evidence="17">2.1.1.57</ecNumber>
            <ecNumber evidence="13">2.7.7.48</ecNumber>
        </recommendedName>
        <alternativeName>
            <fullName>Non-structural protein 5</fullName>
        </alternativeName>
    </component>
</protein>
<reference key="1">
    <citation type="submission" date="2000-02" db="EMBL/GenBank/DDBJ databases">
        <authorList>
            <person name="Yamashiro T."/>
            <person name="Shameem G."/>
            <person name="Lai C.-J."/>
        </authorList>
    </citation>
    <scope>NUCLEOTIDE SEQUENCE [GENOMIC RNA]</scope>
    <scope>SEQUENCE REVISION</scope>
</reference>
<reference key="2">
    <citation type="submission" date="2000-12" db="EMBL/GenBank/DDBJ databases">
        <title>A live attenuated dengue virus type 4 vaccine candidate with a 30 nucleotide deletion in the 3' untranslated region is highly attenuated and immunogenic in humans.</title>
        <authorList>
            <person name="Durbin A.P."/>
            <person name="Karron R.A."/>
            <person name="Sun W."/>
            <person name="Vaughn D.W."/>
            <person name="Reynolds M.J."/>
            <person name="Perreault J.R."/>
            <person name="Men R.H."/>
            <person name="Lai C.-J."/>
            <person name="Elkins W.R."/>
            <person name="Chanock R.M."/>
            <person name="Murphy B.R."/>
            <person name="Whitehead S.S."/>
        </authorList>
    </citation>
    <scope>NUCLEOTIDE SEQUENCE [GENOMIC RNA]</scope>
</reference>
<reference key="3">
    <citation type="journal article" date="1986" name="Virology">
        <title>Cloning full-length dengue type 4 viral DNA sequences: analysis of genes coding for structural proteins.</title>
        <authorList>
            <person name="Zhao B."/>
            <person name="Mackow E."/>
            <person name="Buckler-White A."/>
            <person name="Markoff L."/>
            <person name="Chancock R.M."/>
            <person name="Lai C.-J."/>
            <person name="Makino Y."/>
        </authorList>
    </citation>
    <scope>NUCLEOTIDE SEQUENCE [GENOMIC RNA] OF 1-777</scope>
</reference>
<reference key="4">
    <citation type="journal article" date="1987" name="Virology">
        <title>The nucleotide sequence of dengue type 4 virus: analysis of genes coding for nonstructural proteins.</title>
        <authorList>
            <person name="Mackow E."/>
            <person name="Makino Y."/>
            <person name="Zhao B."/>
            <person name="Zhang Y.M."/>
            <person name="Markoff L."/>
            <person name="Buckler-White A."/>
            <person name="Guiler M."/>
            <person name="Chanock R."/>
            <person name="Lai C.-J."/>
        </authorList>
    </citation>
    <scope>NUCLEOTIDE SEQUENCE [GENOMIC RNA] OF 775-3387</scope>
</reference>
<reference key="5">
    <citation type="journal article" date="1989" name="J. Virol.">
        <title>In vitro processing of dengue virus structural proteins: cleavage of the pre-membrane protein.</title>
        <authorList>
            <person name="Markoff L."/>
        </authorList>
    </citation>
    <scope>PROTEIN SEQUENCE OF 114-143</scope>
    <scope>PROTEOLYTIC PROCESSING (SMALL ENVELOPE PROTEIN M)</scope>
    <source>
        <strain>814669</strain>
    </source>
</reference>
<reference key="6">
    <citation type="journal article" date="2018" name="Cell">
        <title>Comparative Flavivirus-Host Protein Interaction Mapping Reveals Mechanisms of Dengue and Zika Virus Pathogenesis.</title>
        <authorList>
            <person name="Shah P.S."/>
            <person name="Link N."/>
            <person name="Jang G.M."/>
            <person name="Sharp P.P."/>
            <person name="Zhu T."/>
            <person name="Swaney D.L."/>
            <person name="Johnson J.R."/>
            <person name="Von Dollen J."/>
            <person name="Ramage H.R."/>
            <person name="Satkamp L."/>
            <person name="Newton B."/>
            <person name="Huettenhain R."/>
            <person name="Petit M.J."/>
            <person name="Baum T."/>
            <person name="Everitt A."/>
            <person name="Laufman O."/>
            <person name="Tassetto M."/>
            <person name="Shales M."/>
            <person name="Stevenson E."/>
            <person name="Iglesias G.N."/>
            <person name="Shokat L."/>
            <person name="Tripathi S."/>
            <person name="Balasubramaniam V."/>
            <person name="Webb L.G."/>
            <person name="Aguirre S."/>
            <person name="Willsey A.J."/>
            <person name="Garcia-Sastre A."/>
            <person name="Pollard K.S."/>
            <person name="Cherry S."/>
            <person name="Gamarnik A.V."/>
            <person name="Marazzi I."/>
            <person name="Taunton J."/>
            <person name="Fernandez-Sesma A."/>
            <person name="Bellen H.J."/>
            <person name="Andino R."/>
            <person name="Krogan N.J."/>
        </authorList>
    </citation>
    <scope>FUNCTION (RNA-DIRECTED RNA POLYMERASE NS5)</scope>
    <scope>INTERACTION WITH PAF1 COMPLEX (RNA-DIRECTED RNA POLYMERASE NS5)</scope>
    <scope>SUBCELLULAR LOCATION (RNA-DIRECTED RNA POLYMERASE NS5)</scope>
</reference>
<reference key="7">
    <citation type="journal article" date="2007" name="Virology">
        <title>Solution structure of the envelope protein domain III of dengue-4 virus.</title>
        <authorList>
            <person name="Volk D.E."/>
            <person name="Lee Y.C."/>
            <person name="Li X."/>
            <person name="Thiviyanathan V."/>
            <person name="Gromowski G.D."/>
            <person name="Li L."/>
            <person name="Lamb A.R."/>
            <person name="Beasley D.W."/>
            <person name="Barrett A.D."/>
            <person name="Gorenstein D.G."/>
        </authorList>
    </citation>
    <scope>STRUCTURE BY NMR OF 568-679</scope>
</reference>
<comment type="function">
    <molecule>Capsid protein C</molecule>
    <text evidence="5">Plays a role in virus budding by binding to the cell membrane and gathering the viral RNA into a nucleocapsid that forms the core of a mature virus particle. During virus entry, may induce genome penetration into the host cytoplasm after hemifusion induced by the surface proteins. Can migrate to the cell nucleus where it modulates host functions. Overcomes the anti-viral effects of host EXOC1 by sequestering and degrading the latter through the proteasome degradation pathway.</text>
</comment>
<comment type="function">
    <molecule>Non-structural protein 4A</molecule>
    <text evidence="5 7 10">Regulates the ATPase activity of the NS3 helicase activity. NS4A allows NS3 helicase to conserve energy during unwinding. Plays a role in the inhibition of the host innate immune response. Interacts with host MAVS and thereby prevents the interaction between RIGI and MAVS. In turn, IFN-beta production is impaired. Interacts with host AUP1 which mediates induction of lipophagy in host cells and facilitates production of virus progeny particles (By similarity).</text>
</comment>
<comment type="function">
    <molecule>Capsid protein C</molecule>
    <text evidence="1">Inhibits RNA silencing by interfering with host Dicer.</text>
</comment>
<comment type="function">
    <molecule>Peptide pr</molecule>
    <text evidence="5">Prevents premature fusion activity of envelope proteins in trans-Golgi by binding to envelope protein E at pH6.0. After virion release in extracellular space, gets dissociated from E dimers.</text>
</comment>
<comment type="function">
    <molecule>Protein prM</molecule>
    <text evidence="5">Acts as a chaperone for envelope protein E during intracellular virion assembly by masking and inactivating envelope protein E fusion peptide. prM is the only viral peptide matured by host furin in the trans-Golgi network probably to avoid catastrophic activation of the viral fusion activity in acidic Golgi compartment prior to virion release. prM-E cleavage is inefficient, and many virions are only partially matured. These uncleaved prM would play a role in immune evasion.</text>
</comment>
<comment type="function">
    <molecule>Small envelope protein M</molecule>
    <text evidence="5">May play a role in virus budding. Exerts cytotoxic effects by activating a mitochondrial apoptotic pathway through M ectodomain. May display a viroporin activity.</text>
</comment>
<comment type="function">
    <molecule>Envelope protein E</molecule>
    <text evidence="5">Binds to host cell surface receptor and mediates fusion between viral and cellular membranes. Envelope protein is synthesized in the endoplasmic reticulum in the form of heterodimer with protein prM. They play a role in virion budding in the ER, and the newly formed immature particle is covered with 60 spikes composed of heterodimer between precursor prM and envelope protein E. The virion is transported to the Golgi apparatus where the low pH causes dissociation of PrM-E heterodimers and formation of E homodimers. prM-E cleavage is inefficient, and many virions are only partially matured. These uncleaved prM would play a role in immune evasion.</text>
</comment>
<comment type="function">
    <molecule>Non-structural protein 1</molecule>
    <text evidence="10">Involved in immune evasion, pathogenesis and viral replication. Once cleaved off the polyprotein, is targeted to three destinations: the viral replication cycle, the plasma membrane and the extracellular compartment. Essential for viral replication. Required for formation of the replication complex and recruitment of other non-structural proteins to the ER-derived membrane structures. Excreted as a hexameric lipoparticle that plays a role against host immune response. Antagonizing the complement function. Binds to the host macrophages and dendritic cells. Inhibits signal transduction originating from Toll-like receptor 3 (TLR3).</text>
</comment>
<comment type="function">
    <molecule>Non-structural protein 1</molecule>
    <text evidence="5">Disrupts the host endothelial glycocalyx layer of host pulmonary microvascular endothelial cells, inducing degradation of sialic acid and shedding of heparan sulfate proteoglycans. NS1 induces expression of sialidases, heparanase, and activates cathepsin L, which activates heparanase via enzymatic cleavage. These effects are probably linked to the endothelial hyperpermeability observed in severe dengue disease.</text>
</comment>
<comment type="function">
    <molecule>Non-structural protein 2A</molecule>
    <text evidence="5">Component of the viral RNA replication complex that functions in virion assembly and antagonizes the host immune response.</text>
</comment>
<comment type="function">
    <molecule>Serine protease subunit NS2B</molecule>
    <text evidence="5 15">Required cofactor for the serine protease function of NS3. May have membrane-destabilizing activity and form viroporins (By similarity).</text>
</comment>
<comment type="function">
    <molecule>Serine protease NS3</molecule>
    <text evidence="16">Displays three enzymatic activities: serine protease, NTPase and RNA helicase. NS3 serine protease, in association with NS2B, performs its autocleavage and cleaves the polyprotein at dibasic sites in the cytoplasm: C-prM, NS2A-NS2B, NS2B-NS3, NS3-NS4A, NS4A-2K and NS4B-NS5. NS3 RNA helicase binds RNA and unwinds dsRNA in the 3' to 5' direction.</text>
</comment>
<comment type="function">
    <molecule>Peptide 2k</molecule>
    <text evidence="5">Functions as a signal peptide for NS4B and is required for the interferon antagonism activity of the latter.</text>
</comment>
<comment type="function">
    <molecule>Non-structural protein 4B</molecule>
    <text evidence="10">Induces the formation of ER-derived membrane vesicles where the viral replication takes place. Inhibits interferon (IFN)-induced host STAT1 phosphorylation and nuclear translocation, thereby preventing the establishment of cellular antiviral state by blocking the IFN-alpha/beta pathway.</text>
</comment>
<comment type="function">
    <molecule>RNA-directed RNA polymerase NS5</molecule>
    <text evidence="5 19">Replicates the viral (+) and (-) RNA genome, and performs the capping of genomes in the cytoplasm. NS5 methylates viral RNA cap at guanine N-7 and ribose 2'-O positions. Besides its role in RNA genome replication, also prevents the establishment of cellular antiviral state by blocking the interferon-alpha/beta (IFN-alpha/beta) signaling pathway. Inhibits host TYK2 and STAT2 phosphorylation, thereby preventing activation of JAK-STAT signaling pathway (By similarity). May reduce immune responses by preventing the recruitment of the host PAF1 complex to interferon-responsive genes (PubMed:30550790).</text>
</comment>
<comment type="catalytic activity">
    <reaction>
        <text>Selective hydrolysis of -Xaa-Xaa-|-Yaa- bonds in which each of the Xaa can be either Arg or Lys and Yaa can be either Ser or Ala.</text>
        <dbReference type="EC" id="3.4.21.91"/>
    </reaction>
</comment>
<comment type="catalytic activity">
    <reaction evidence="13">
        <text>RNA(n) + a ribonucleoside 5'-triphosphate = RNA(n+1) + diphosphate</text>
        <dbReference type="Rhea" id="RHEA:21248"/>
        <dbReference type="Rhea" id="RHEA-COMP:14527"/>
        <dbReference type="Rhea" id="RHEA-COMP:17342"/>
        <dbReference type="ChEBI" id="CHEBI:33019"/>
        <dbReference type="ChEBI" id="CHEBI:61557"/>
        <dbReference type="ChEBI" id="CHEBI:140395"/>
        <dbReference type="EC" id="2.7.7.48"/>
    </reaction>
</comment>
<comment type="catalytic activity">
    <reaction>
        <text>a ribonucleoside 5'-triphosphate + H2O = a ribonucleoside 5'-diphosphate + phosphate + H(+)</text>
        <dbReference type="Rhea" id="RHEA:23680"/>
        <dbReference type="ChEBI" id="CHEBI:15377"/>
        <dbReference type="ChEBI" id="CHEBI:15378"/>
        <dbReference type="ChEBI" id="CHEBI:43474"/>
        <dbReference type="ChEBI" id="CHEBI:57930"/>
        <dbReference type="ChEBI" id="CHEBI:61557"/>
        <dbReference type="EC" id="3.6.1.15"/>
    </reaction>
</comment>
<comment type="catalytic activity">
    <reaction>
        <text>ATP + H2O = ADP + phosphate + H(+)</text>
        <dbReference type="Rhea" id="RHEA:13065"/>
        <dbReference type="ChEBI" id="CHEBI:15377"/>
        <dbReference type="ChEBI" id="CHEBI:15378"/>
        <dbReference type="ChEBI" id="CHEBI:30616"/>
        <dbReference type="ChEBI" id="CHEBI:43474"/>
        <dbReference type="ChEBI" id="CHEBI:456216"/>
        <dbReference type="EC" id="3.6.4.13"/>
    </reaction>
</comment>
<comment type="catalytic activity">
    <reaction evidence="17">
        <text>a 5'-end (5'-triphosphoguanosine)-ribonucleoside in mRNA + S-adenosyl-L-methionine = a 5'-end (N(7)-methyl 5'-triphosphoguanosine)-ribonucleoside in mRNA + S-adenosyl-L-homocysteine</text>
        <dbReference type="Rhea" id="RHEA:67008"/>
        <dbReference type="Rhea" id="RHEA-COMP:17166"/>
        <dbReference type="Rhea" id="RHEA-COMP:17167"/>
        <dbReference type="ChEBI" id="CHEBI:57856"/>
        <dbReference type="ChEBI" id="CHEBI:59789"/>
        <dbReference type="ChEBI" id="CHEBI:156461"/>
        <dbReference type="ChEBI" id="CHEBI:167617"/>
        <dbReference type="EC" id="2.1.1.56"/>
    </reaction>
</comment>
<comment type="catalytic activity">
    <reaction evidence="17">
        <text>a 5'-end (N(7)-methyl 5'-triphosphoguanosine)-ribonucleoside in mRNA + S-adenosyl-L-methionine = a 5'-end (N(7)-methyl 5'-triphosphoguanosine)-(2'-O-methyl-ribonucleoside) in mRNA + S-adenosyl-L-homocysteine + H(+)</text>
        <dbReference type="Rhea" id="RHEA:67020"/>
        <dbReference type="Rhea" id="RHEA-COMP:17167"/>
        <dbReference type="Rhea" id="RHEA-COMP:17168"/>
        <dbReference type="ChEBI" id="CHEBI:15378"/>
        <dbReference type="ChEBI" id="CHEBI:57856"/>
        <dbReference type="ChEBI" id="CHEBI:59789"/>
        <dbReference type="ChEBI" id="CHEBI:156461"/>
        <dbReference type="ChEBI" id="CHEBI:167609"/>
        <dbReference type="EC" id="2.1.1.57"/>
    </reaction>
</comment>
<comment type="subunit">
    <molecule>Capsid protein C</molecule>
    <text evidence="5">Homodimer. Interacts (via N-terminus) with host EXOC1 (via C-terminus); this interaction results in EXOC1 degradation through the proteasome degradation pathway.</text>
</comment>
<comment type="subunit">
    <molecule>Protein prM</molecule>
    <text evidence="5">Forms heterodimers with envelope protein E in the endoplasmic reticulum and Golgi.</text>
</comment>
<comment type="subunit">
    <molecule>Envelope protein E</molecule>
    <text evidence="5">Homodimer; in the endoplasmic reticulum and Golgi. Interacts with protein prM. Interacts with non-structural protein 1.</text>
</comment>
<comment type="subunit">
    <molecule>Non-structural protein 1</molecule>
    <text evidence="5">Homodimer; Homohexamer when secreted. Interacts with envelope protein E.</text>
</comment>
<comment type="subunit">
    <molecule>Non-structural protein 2A</molecule>
    <text evidence="5">Interacts (via N-terminus) with serine protease NS3.</text>
</comment>
<comment type="subunit">
    <molecule>Serine protease subunit NS2B</molecule>
    <text evidence="5">Forms a heterodimer with serine protease NS3. May form homooligomers.</text>
</comment>
<comment type="subunit">
    <molecule>Serine protease NS3</molecule>
    <text evidence="5">Forms a heterodimer with NS2B. Interacts with NS4B. Interacts with unphosphorylated RNA-directed RNA polymerase NS5; this interaction stimulates RNA-directed RNA polymerase NS5 guanylyltransferase activity. Interacts with host SHFL.</text>
</comment>
<comment type="subunit">
    <molecule>Non-structural protein 4A</molecule>
    <text evidence="5 7">Interacts with host MAVS; this interaction inhibits the synthesis of IFN-beta. Interacts with host SHFL. Interacts with host AUP1; the interaction occurs in the presence of Dengue virus NS4B and induces lipophagy which facilitates production of virus progeny particles (By similarity).</text>
</comment>
<comment type="subunit">
    <molecule>Non-structural protein 4B</molecule>
    <text evidence="5">Interacts with serine protease NS3.</text>
</comment>
<comment type="subunit">
    <molecule>RNA-directed RNA polymerase NS5</molecule>
    <text evidence="5 19">Homodimer (By similarity). Interacts with host STAT2; this interaction inhibits the phosphorylation of the latter, and, when all viral proteins are present (polyprotein), targets STAT2 for degradation (By similarity). Interacts with serine protease NS3 (By similarity). Interacts with host PAF1 complex; the interaction may prevent the recruitment of the PAF1 complex to interferon-responsive genes, and thus reduces the immune response (PubMed:30550790).</text>
</comment>
<comment type="subcellular location">
    <molecule>Capsid protein C</molecule>
    <subcellularLocation>
        <location evidence="5">Virion</location>
    </subcellularLocation>
    <subcellularLocation>
        <location evidence="5">Host nucleus</location>
    </subcellularLocation>
    <subcellularLocation>
        <location evidence="5">Host cytoplasm</location>
    </subcellularLocation>
    <subcellularLocation>
        <location evidence="5">Host cytoplasm</location>
        <location evidence="5">Host perinuclear region</location>
    </subcellularLocation>
</comment>
<comment type="subcellular location">
    <molecule>Peptide pr</molecule>
    <subcellularLocation>
        <location evidence="5">Secreted</location>
    </subcellularLocation>
</comment>
<comment type="subcellular location">
    <molecule>Small envelope protein M</molecule>
    <subcellularLocation>
        <location evidence="5">Virion membrane</location>
        <topology evidence="11">Multi-pass membrane protein</topology>
    </subcellularLocation>
    <subcellularLocation>
        <location evidence="5">Host endoplasmic reticulum membrane</location>
        <topology evidence="11">Multi-pass membrane protein</topology>
    </subcellularLocation>
</comment>
<comment type="subcellular location">
    <molecule>Envelope protein E</molecule>
    <subcellularLocation>
        <location evidence="5">Virion membrane</location>
        <topology evidence="11">Multi-pass membrane protein</topology>
    </subcellularLocation>
    <subcellularLocation>
        <location evidence="5">Host endoplasmic reticulum membrane</location>
        <topology evidence="11">Multi-pass membrane protein</topology>
    </subcellularLocation>
</comment>
<comment type="subcellular location">
    <molecule>Non-structural protein 1</molecule>
    <subcellularLocation>
        <location evidence="5">Secreted</location>
    </subcellularLocation>
    <subcellularLocation>
        <location>Host endoplasmic reticulum membrane</location>
        <topology>Peripheral membrane protein</topology>
        <orientation evidence="5">Lumenal side</orientation>
    </subcellularLocation>
    <text evidence="10">Located in RE-derived vesicles hosting the replication complex.</text>
</comment>
<comment type="subcellular location">
    <molecule>Non-structural protein 2A</molecule>
    <subcellularLocation>
        <location evidence="5">Host endoplasmic reticulum membrane</location>
        <topology evidence="5">Multi-pass membrane protein</topology>
    </subcellularLocation>
</comment>
<comment type="subcellular location">
    <molecule>Serine protease subunit NS2B</molecule>
    <subcellularLocation>
        <location>Host endoplasmic reticulum membrane</location>
        <topology evidence="5">Multi-pass membrane protein</topology>
    </subcellularLocation>
</comment>
<comment type="subcellular location">
    <molecule>Serine protease NS3</molecule>
    <subcellularLocation>
        <location evidence="16">Host endoplasmic reticulum membrane</location>
        <topology evidence="16">Peripheral membrane protein</topology>
        <orientation evidence="16">Cytoplasmic side</orientation>
    </subcellularLocation>
    <text evidence="16">Remains non-covalently associated to serine protease subunit NS2B.</text>
</comment>
<comment type="subcellular location">
    <molecule>Non-structural protein 4A</molecule>
    <subcellularLocation>
        <location evidence="5">Host endoplasmic reticulum membrane</location>
        <topology evidence="5">Multi-pass membrane protein</topology>
    </subcellularLocation>
    <subcellularLocation>
        <location evidence="5">Host mitochondrion</location>
    </subcellularLocation>
    <text evidence="5">Located in RE-associated vesicles hosting the replication complex. Interacts with host MAVS in the mitochondrion-associated endoplasmic reticulum membranes.</text>
</comment>
<comment type="subcellular location">
    <molecule>Non-structural protein 4B</molecule>
    <subcellularLocation>
        <location evidence="5">Host endoplasmic reticulum membrane</location>
        <topology evidence="5">Multi-pass membrane protein</topology>
    </subcellularLocation>
    <text evidence="10">Located in RE-derived vesicles hosting the replication complex.</text>
</comment>
<comment type="subcellular location">
    <molecule>RNA-directed RNA polymerase NS5</molecule>
    <subcellularLocation>
        <location evidence="5">Host endoplasmic reticulum membrane</location>
        <topology evidence="5">Peripheral membrane protein</topology>
        <orientation evidence="5">Cytoplasmic side</orientation>
    </subcellularLocation>
    <subcellularLocation>
        <location evidence="19">Host nucleus</location>
    </subcellularLocation>
    <text evidence="5">Located in RE-associated vesicles hosting the replication complex. NS5 protein is mainly localized in the nucleus rather than in ER vesicles, especially in the DENV 2, 3, 4 serotypes.</text>
</comment>
<comment type="domain">
    <text evidence="5">The transmembrane domains of the small envelope protein M and envelope protein E contain an endoplasmic reticulum retention signal.</text>
</comment>
<comment type="PTM">
    <molecule>Genome polyprotein</molecule>
    <text evidence="5">Specific enzymatic cleavages in vivo yield mature proteins. Cleavages in the lumen of endoplasmic reticulum are performed by host signal peptidase, whereas cleavages in the cytoplasmic side are performed by serine protease NS3. Signal cleavage at the 2K-4B site requires a prior NS3 protease-mediated cleavage at the 4A-2K site.</text>
</comment>
<comment type="PTM">
    <molecule>Protein prM</molecule>
    <text evidence="5 18">Cleaved in post-Golgi vesicles by a host furin, releasing the mature small envelope protein M, and peptide pr. This cleavage is incomplete as up to 30% of viral particles still carry uncleaved prM.</text>
</comment>
<comment type="PTM">
    <molecule>Envelope protein E</molecule>
    <text evidence="5">N-glycosylated.</text>
</comment>
<comment type="PTM">
    <molecule>Non-structural protein 1</molecule>
    <text evidence="5">N-glycosylated. The excreted form is glycosylated and this is required for efficient secretion of the protein from infected cells.</text>
</comment>
<comment type="PTM">
    <molecule>Serine protease NS3</molecule>
    <text evidence="8">Acetylated by host KAT5. Acetylation modulates NS3 RNA-binding and unwinding activities and plays an important positive role for viral replication.</text>
</comment>
<comment type="PTM">
    <molecule>RNA-directed RNA polymerase NS5</molecule>
    <text evidence="6">Sumoylation of RNA-directed RNA polymerase NS5 increases NS5 protein stability allowing proper viral RNA replication.</text>
</comment>
<comment type="PTM">
    <molecule>RNA-directed RNA polymerase NS5</molecule>
    <text evidence="5">Phosphorylated on serines residues. This phosphorylation may trigger NS5 nuclear localization.</text>
</comment>
<comment type="similarity">
    <text evidence="17">In the N-terminal section; belongs to the class I-like SAM-binding methyltransferase superfamily. mRNA cap 0-1 NS5-type methyltransferase family.</text>
</comment>
<accession>P09866</accession>
<accession>Q88661</accession>
<accession>Q88662</accession>
<accession>Q88663</accession>
<accession>Q88664</accession>
<accession>Q88665</accession>
<accession>Q88666</accession>
<accession>Q88667</accession>
<accession>Q88668</accession>
<accession>Q88669</accession>
<accession>Q88670</accession>
<accession>Q88671</accession>
<accession>Q99BK4</accession>
<accession>Q9DKQ5</accession>
<accession>Q9DKQ6</accession>
<accession>Q9DKQ7</accession>
<sequence>MNQRKKVVRPPFNMLKRERNRVSTPQGLVKRFSTGLFSGKGPLRMVLAFITFLRVLSIPPTAGILKRWGQLKKNKAIKILIGFRKEIGRMLNILNGRKRSTITLLCLIPTVMAFSLSTRDGEPLMIVAKHERGRPLLFKTTEGINKCTLIAMDLGEMCEDTVTYKCPLLVNTEPEDIDCWCNLTSTWVMYGTCTQSGERRREKRSVALTPHSGMGLETRAETWMSSEGAWKHAQRVESWILRNPGFALLAGFMAYMIGQTGIQRTVFFVLMMLVAPSYGMRCVGVGNRDFVEGVSGGAWVDLVLEHGGCVTTMAQGKPTLDFELTKTTAKEVALLRTYCIEASISNITTATRCPTQGEPYLKEEQDQQYICRRDVVDRGWGNGCGLFGKGGVVTCAKFSCSGKITGNLVQIENLEYTVVVTVHNGDTHAVGNDTSNHGVTAMITPRSPSVEVKLPDYGELTLDCEPRSGIDFNEMILMKMKKKTWLVHKQWFLDLPLPWTAGADTSEVHWNYKERMVTFKVPHAKRQDVTVLGSQEGAMHSALAGATEVDSGDGNHMFAGHLKCKVRMEKLRIKGMSYTMCSGKFSIDKEMAETQHGTTVVKVKYEGAGAPCKVPIEIRDVNKEKVVGRIISSTPLAENTNSVTNIELEPPFGDSYIVIGVGNSALTLHWFRKGSSIGKMFESTYRGAKRMAILGETAWDFGSVGGLFTSLGKAVHQVFGSVYTTMFGGVSWMIRILIGFLVLWIGTNSRNTSMAMTCIAVGGITLFLGFTVQADMGCVASWSGKELKCGSGIFVVDNVHTWTEQYKFQPESPARLASAILNAHKDGVCGIRSTTRLENVMWKQITNELNYVLWEGGHDLTVVAGDVKGVLTKGKRALTPPVSDLKYSWKTWGKAKIFTPEARNSTFLIDGPDTSECPNERRAWNSLEVEDYGFGMFTTNIWMKFREGSSEVCDHRLMSAAIKDQKAVHADMGYWIESSKNQTWQIEKASLIEVKTCLWPKTHTLWSNGVLESQMLIPKSYAGPFSQHNYRQGYATQTVGPWHLGKLEIDFGECPGTTVTIQEDCDHRGPSLRTTTASGKLVTQWCCRSCTMPPLRFLGEDGCWYGMEIRPLSEKEENMVKSQVTAGQGTSETFSMGLLCLTLFVEECLRRRVTRKHMILVVVITLCAIILGGLTWMDLLRALIMLGDTMSGRIGGQIHLAIMAVFKMSPGYVLGVFLRKLTSRETALMVIGMAMTTVLSIPHDLMELIDGISLGLILLKIVTQFDNTQVGTLALSLTFIRSTMPLVMAWRTIMAVLFVVTLIPLCRTSCLQKQSHWVEITALILGAQALPVYLMTLMKGASRRSWPLNEGIMAVGLVSLLGSALLKNDVPLAGPMVAGGLLLAAYVMSGSSADLSLEKAANVQWDEMADITGSSPIIEVKQDEDGSFSIRDVEETNMITLLVKLALITVSGLYPLAIPVTMTLWYMWQVKTQRSGALWDVPSPAATKKAALSEGVYRIMQRGLFGKTQVGVGIHMEGVFHTMWHVTRGSVICHETGRLEPSWADVRNDMISYGGGWRLGDKWDKEEDVQVLAIEPGKNPKHVQTKPGLFKTLTGEIGAVTLDFKPGTSGSPIINRKGKVIGLYGNGVVTKSGDYVSAITQAERIGEPDYEVDEDIFRKKRLTIMDLHPGAGKTKRILPSIVREALKRRLRTLILAPTRVVAAEMEEALRGLPIRYQTPAVKSEHTGREIVDLMCHATFTTRLLSSTRVPNYNLIVMDEAHFTDPSSVAARGYISTRVEMGEAAAIFMTATPPGATDPFPQSNSPIEDIEREIPERSWNTGFDWITDYQGKTVWFVPSIKAGNDIANCLRKSGKKVIQLSRKTFDTEYPKTKLTDWDFVVTTDISEMGANFRAGRVIDPRRCLKPVILPDGPERVILAGPIPVTPASAAQRRGRIGRNPAQEDDQYVFSGDPLKNDEDHAHWTEAKMLLDNIYTPEGIIPTLFGPEREKTQAIDGEFRLRGEQRKTFVELMRRGDLPVWLSYKVASAGISYKDREWCFTGERNNQILEENMEVEIWTREGEKKKLRPRWLDARVYADPMALKDFKEFASGRKSITLDILTEIASLPTYLSSRAKLALDNIVMLHTTERGGRAYQHALNELPESLETLMLVALLGAMTAGIFLFFMQGKGIGKLSMGLITIAVASGLLWVAEIQPQWIAASIILEFFLMVLLIPEPEKQRTPQDNQLIYVILTILTIIGLIAANEMGLIEKTKTDFGFYQVKTETTILDVDLRPASAWTLYAVATTILTPMLRHTIENTSANLSLAAIANQAAVLMGLGKGWPLHRMDLGVPLLAMGCYSQVNPTTLTASLVMLLVHYAIIGPGLQAKATREAQKRTAAGIMKNPTVDGITVIDLEPISYDPKFEKQLGQVMLLVLCAGQLLLMRTTWAFCEVLTLATGPILTLWEGNPGRFWNTTIAVSTANIFRGSYLAGAGLAFSLIKNAQTPRRGTGTTGETLGEKWKRQLNSLDRKEFEEYKRSGILEVDRTEAKSALKDGSKIKHAVSRGSSKIRWIVERGMVKPKGKVVDLGCGRGGWSYYMATLKNVTEVKGYTKGGPGHEEPIPMATYGWNLVKLHSGVDVFYKPTEQVDTLLCDIGESSSNPTIEEGRTLRVLKMVEPWLSSKPEFCIKVLNPYMPTVIEELEKLQRKHGGNLVRCPLSRNSTHEMYWVSGASGNIVSSVNTTSKMLLNRFTTRHRKPTYEKDVDLGAGTRSVSTETEKPDMTIIGRRLQRLQEEHKETWHYDQENPYRTWAYHGSYEAPSTGSASSMVNGVVKLLTKPWDVIPMVTQLAMTDTTPFGQQRVFKEKVDTRTPQPKPGTRMVMTTTANWLWALLGKKKNPRLCTREEFISKVRSNAAIGAVFQEEQGWTSASEAVNDSRFWELVDKERALHQEGKCESCVYNMMGKREKKLGEFGRAKGSRAIWYMWLGARFLEFEALGFLNEDHWFGRENSWSGVEGEGLHRLGYILEEIDKKDGDLMYADDTAGWDTRITEDDLQNEELITEQMAPHHKILAKAIFKLTYQNKVVKVLRPTPRGAVMDIISRKDQRGSGQVGTYGLNTFTNMEVQLIRQMEAEGVITQDDMQNPKGLKERVEKWLKECGVDRLKRMAISGDDCVVKPLDERFGTSLLFLNDMGKVRKDIPQWEPSKGWKNWQEVPFCSHHFHKIFMKDGRSLVVPCRNQDELIGRARISQGAGWSLRETACLGKAYAQMWSLMYFHRRDLRLASMAICSAVPTEWFPTSRTTWSIHAHHQWMTTEDMLKVWNRVWIEDNPNMTDKTPVHSWEDIPYLGKREDLWCGSLIGLSSRATWAKNIHTAITQVRNLIGKEEYVDYMPVMKRYSAPSESEGVL</sequence>
<dbReference type="EC" id="3.4.21.91"/>
<dbReference type="EC" id="3.6.1.15" evidence="10"/>
<dbReference type="EC" id="3.6.4.13" evidence="10"/>
<dbReference type="EC" id="2.1.1.56" evidence="17"/>
<dbReference type="EC" id="2.1.1.57" evidence="17"/>
<dbReference type="EC" id="2.7.7.48" evidence="13"/>
<dbReference type="EMBL" id="M14931">
    <property type="protein sequence ID" value="AAA42964.2"/>
    <property type="molecule type" value="Genomic_RNA"/>
</dbReference>
<dbReference type="EMBL" id="AF326825">
    <property type="protein sequence ID" value="AAG45435.1"/>
    <property type="molecule type" value="Genomic_RNA"/>
</dbReference>
<dbReference type="EMBL" id="AF326826">
    <property type="protein sequence ID" value="AAG45436.1"/>
    <property type="molecule type" value="Genomic_RNA"/>
</dbReference>
<dbReference type="EMBL" id="AF326827">
    <property type="protein sequence ID" value="AAG45437.1"/>
    <property type="molecule type" value="Genomic_RNA"/>
</dbReference>
<dbReference type="EMBL" id="AF326573">
    <property type="protein sequence ID" value="AAK01233.1"/>
    <property type="molecule type" value="Genomic_RNA"/>
</dbReference>
<dbReference type="RefSeq" id="NP_073286.1">
    <property type="nucleotide sequence ID" value="NC_002640.1"/>
</dbReference>
<dbReference type="PDB" id="2H0P">
    <property type="method" value="NMR"/>
    <property type="chains" value="A=568-679"/>
</dbReference>
<dbReference type="PDB" id="3UAJ">
    <property type="method" value="X-ray"/>
    <property type="resolution" value="3.23 A"/>
    <property type="chains" value="A/B=280-674"/>
</dbReference>
<dbReference type="PDB" id="3UC0">
    <property type="method" value="X-ray"/>
    <property type="resolution" value="2.71 A"/>
    <property type="chains" value="A/B=280-329, A/B=414-469, A/B=560-577"/>
</dbReference>
<dbReference type="PDB" id="3WE1">
    <property type="method" value="X-ray"/>
    <property type="resolution" value="2.28 A"/>
    <property type="chains" value="A/B=575-679"/>
</dbReference>
<dbReference type="PDB" id="4X42">
    <property type="method" value="X-ray"/>
    <property type="resolution" value="2.78 A"/>
    <property type="chains" value="A/B/C/D/E/F=575-679"/>
</dbReference>
<dbReference type="PDB" id="5B1C">
    <property type="method" value="X-ray"/>
    <property type="resolution" value="2.00 A"/>
    <property type="chains" value="A/B/C=575-679"/>
</dbReference>
<dbReference type="PDB" id="7A3Q">
    <property type="method" value="X-ray"/>
    <property type="resolution" value="2.70 A"/>
    <property type="chains" value="A/B=280-674"/>
</dbReference>
<dbReference type="PDBsum" id="2H0P"/>
<dbReference type="PDBsum" id="3UAJ"/>
<dbReference type="PDBsum" id="3UC0"/>
<dbReference type="PDBsum" id="3WE1"/>
<dbReference type="PDBsum" id="4X42"/>
<dbReference type="PDBsum" id="5B1C"/>
<dbReference type="PDBsum" id="7A3Q"/>
<dbReference type="BMRB" id="P09866"/>
<dbReference type="SMR" id="P09866"/>
<dbReference type="MINT" id="P09866"/>
<dbReference type="MEROPS" id="S07.001"/>
<dbReference type="ABCD" id="P09866">
    <property type="antibodies" value="2 sequenced antibodies"/>
</dbReference>
<dbReference type="GeneID" id="5075729"/>
<dbReference type="KEGG" id="vg:5075729"/>
<dbReference type="EvolutionaryTrace" id="P09866"/>
<dbReference type="PRO" id="PR:P09866"/>
<dbReference type="Proteomes" id="UP000000274">
    <property type="component" value="Segment"/>
</dbReference>
<dbReference type="Proteomes" id="UP000108177">
    <property type="component" value="Genome"/>
</dbReference>
<dbReference type="Proteomes" id="UP000115480">
    <property type="component" value="Genome"/>
</dbReference>
<dbReference type="Proteomes" id="UP000137425">
    <property type="component" value="Genome"/>
</dbReference>
<dbReference type="Proteomes" id="UP000156481">
    <property type="component" value="Segment"/>
</dbReference>
<dbReference type="GO" id="GO:0005576">
    <property type="term" value="C:extracellular region"/>
    <property type="evidence" value="ECO:0007669"/>
    <property type="project" value="UniProtKB-SubCell"/>
</dbReference>
<dbReference type="GO" id="GO:0044167">
    <property type="term" value="C:host cell endoplasmic reticulum membrane"/>
    <property type="evidence" value="ECO:0007669"/>
    <property type="project" value="UniProtKB-SubCell"/>
</dbReference>
<dbReference type="GO" id="GO:0033650">
    <property type="term" value="C:host cell mitochondrion"/>
    <property type="evidence" value="ECO:0007669"/>
    <property type="project" value="UniProtKB-SubCell"/>
</dbReference>
<dbReference type="GO" id="GO:0042025">
    <property type="term" value="C:host cell nucleus"/>
    <property type="evidence" value="ECO:0007669"/>
    <property type="project" value="UniProtKB-SubCell"/>
</dbReference>
<dbReference type="GO" id="GO:0044220">
    <property type="term" value="C:host cell perinuclear region of cytoplasm"/>
    <property type="evidence" value="ECO:0007669"/>
    <property type="project" value="UniProtKB-SubCell"/>
</dbReference>
<dbReference type="GO" id="GO:0016020">
    <property type="term" value="C:membrane"/>
    <property type="evidence" value="ECO:0007669"/>
    <property type="project" value="UniProtKB-KW"/>
</dbReference>
<dbReference type="GO" id="GO:0019028">
    <property type="term" value="C:viral capsid"/>
    <property type="evidence" value="ECO:0007669"/>
    <property type="project" value="UniProtKB-KW"/>
</dbReference>
<dbReference type="GO" id="GO:0019031">
    <property type="term" value="C:viral envelope"/>
    <property type="evidence" value="ECO:0007669"/>
    <property type="project" value="UniProtKB-KW"/>
</dbReference>
<dbReference type="GO" id="GO:0055036">
    <property type="term" value="C:virion membrane"/>
    <property type="evidence" value="ECO:0007669"/>
    <property type="project" value="UniProtKB-SubCell"/>
</dbReference>
<dbReference type="GO" id="GO:0005524">
    <property type="term" value="F:ATP binding"/>
    <property type="evidence" value="ECO:0007669"/>
    <property type="project" value="UniProtKB-KW"/>
</dbReference>
<dbReference type="GO" id="GO:0016887">
    <property type="term" value="F:ATP hydrolysis activity"/>
    <property type="evidence" value="ECO:0007669"/>
    <property type="project" value="RHEA"/>
</dbReference>
<dbReference type="GO" id="GO:0015267">
    <property type="term" value="F:channel activity"/>
    <property type="evidence" value="ECO:0007669"/>
    <property type="project" value="UniProtKB-KW"/>
</dbReference>
<dbReference type="GO" id="GO:0003725">
    <property type="term" value="F:double-stranded RNA binding"/>
    <property type="evidence" value="ECO:0007669"/>
    <property type="project" value="InterPro"/>
</dbReference>
<dbReference type="GO" id="GO:0046872">
    <property type="term" value="F:metal ion binding"/>
    <property type="evidence" value="ECO:0007669"/>
    <property type="project" value="UniProtKB-KW"/>
</dbReference>
<dbReference type="GO" id="GO:0004483">
    <property type="term" value="F:mRNA (nucleoside-2'-O-)-methyltransferase activity"/>
    <property type="evidence" value="ECO:0007669"/>
    <property type="project" value="UniProtKB-EC"/>
</dbReference>
<dbReference type="GO" id="GO:0004482">
    <property type="term" value="F:mRNA 5'-cap (guanine-N7-)-methyltransferase activity"/>
    <property type="evidence" value="ECO:0007669"/>
    <property type="project" value="UniProtKB-EC"/>
</dbReference>
<dbReference type="GO" id="GO:0046983">
    <property type="term" value="F:protein dimerization activity"/>
    <property type="evidence" value="ECO:0007669"/>
    <property type="project" value="InterPro"/>
</dbReference>
<dbReference type="GO" id="GO:0003724">
    <property type="term" value="F:RNA helicase activity"/>
    <property type="evidence" value="ECO:0007669"/>
    <property type="project" value="UniProtKB-EC"/>
</dbReference>
<dbReference type="GO" id="GO:0003968">
    <property type="term" value="F:RNA-directed RNA polymerase activity"/>
    <property type="evidence" value="ECO:0007669"/>
    <property type="project" value="UniProtKB-KW"/>
</dbReference>
<dbReference type="GO" id="GO:0004252">
    <property type="term" value="F:serine-type endopeptidase activity"/>
    <property type="evidence" value="ECO:0007669"/>
    <property type="project" value="InterPro"/>
</dbReference>
<dbReference type="GO" id="GO:0005198">
    <property type="term" value="F:structural molecule activity"/>
    <property type="evidence" value="ECO:0007669"/>
    <property type="project" value="InterPro"/>
</dbReference>
<dbReference type="GO" id="GO:0075512">
    <property type="term" value="P:clathrin-dependent endocytosis of virus by host cell"/>
    <property type="evidence" value="ECO:0007669"/>
    <property type="project" value="UniProtKB-KW"/>
</dbReference>
<dbReference type="GO" id="GO:0039654">
    <property type="term" value="P:fusion of virus membrane with host endosome membrane"/>
    <property type="evidence" value="ECO:0007669"/>
    <property type="project" value="UniProtKB-KW"/>
</dbReference>
<dbReference type="GO" id="GO:0034220">
    <property type="term" value="P:monoatomic ion transmembrane transport"/>
    <property type="evidence" value="ECO:0007669"/>
    <property type="project" value="UniProtKB-KW"/>
</dbReference>
<dbReference type="GO" id="GO:0006508">
    <property type="term" value="P:proteolysis"/>
    <property type="evidence" value="ECO:0007669"/>
    <property type="project" value="UniProtKB-KW"/>
</dbReference>
<dbReference type="GO" id="GO:0039520">
    <property type="term" value="P:symbiont-mediated activation of host autophagy"/>
    <property type="evidence" value="ECO:0007669"/>
    <property type="project" value="UniProtKB-KW"/>
</dbReference>
<dbReference type="GO" id="GO:0039545">
    <property type="term" value="P:symbiont-mediated suppression of host cytoplasmic pattern recognition receptor signaling pathway via inhibition of MAVS activity"/>
    <property type="evidence" value="ECO:0007669"/>
    <property type="project" value="UniProtKB-KW"/>
</dbReference>
<dbReference type="GO" id="GO:0039574">
    <property type="term" value="P:symbiont-mediated suppression of host JAK-STAT cascade via inhibition of host TYK2 activity"/>
    <property type="evidence" value="ECO:0007669"/>
    <property type="project" value="UniProtKB-KW"/>
</dbReference>
<dbReference type="GO" id="GO:0039564">
    <property type="term" value="P:symbiont-mediated suppression of host JAK-STAT cascade via inhibition of STAT2 activity"/>
    <property type="evidence" value="ECO:0007669"/>
    <property type="project" value="UniProtKB-KW"/>
</dbReference>
<dbReference type="GO" id="GO:0039502">
    <property type="term" value="P:symbiont-mediated suppression of host type I interferon-mediated signaling pathway"/>
    <property type="evidence" value="ECO:0007669"/>
    <property type="project" value="UniProtKB-KW"/>
</dbReference>
<dbReference type="GO" id="GO:0039694">
    <property type="term" value="P:viral RNA genome replication"/>
    <property type="evidence" value="ECO:0007669"/>
    <property type="project" value="InterPro"/>
</dbReference>
<dbReference type="GO" id="GO:0019062">
    <property type="term" value="P:virion attachment to host cell"/>
    <property type="evidence" value="ECO:0007669"/>
    <property type="project" value="UniProtKB-KW"/>
</dbReference>
<dbReference type="CDD" id="cd20761">
    <property type="entry name" value="capping_2-OMTase_Flaviviridae"/>
    <property type="match status" value="1"/>
</dbReference>
<dbReference type="CDD" id="cd17931">
    <property type="entry name" value="DEXHc_viral_Ns3"/>
    <property type="match status" value="1"/>
</dbReference>
<dbReference type="CDD" id="cd12149">
    <property type="entry name" value="Flavi_E_C"/>
    <property type="match status" value="1"/>
</dbReference>
<dbReference type="CDD" id="cd17038">
    <property type="entry name" value="Flavi_M"/>
    <property type="match status" value="1"/>
</dbReference>
<dbReference type="CDD" id="cd23204">
    <property type="entry name" value="Flavivirus_RdRp"/>
    <property type="match status" value="1"/>
</dbReference>
<dbReference type="CDD" id="cd18806">
    <property type="entry name" value="SF2_C_viral"/>
    <property type="match status" value="1"/>
</dbReference>
<dbReference type="FunFam" id="1.20.1280.260:FF:000001">
    <property type="entry name" value="Envelope glycoprotein"/>
    <property type="match status" value="1"/>
</dbReference>
<dbReference type="FunFam" id="2.60.40.350:FF:000001">
    <property type="entry name" value="Envelope glycoprotein"/>
    <property type="match status" value="1"/>
</dbReference>
<dbReference type="FunFam" id="1.10.10.930:FF:000001">
    <property type="entry name" value="Genome polyprotein"/>
    <property type="match status" value="1"/>
</dbReference>
<dbReference type="FunFam" id="1.10.260.90:FF:000001">
    <property type="entry name" value="Genome polyprotein"/>
    <property type="match status" value="1"/>
</dbReference>
<dbReference type="FunFam" id="1.10.8.970:FF:000002">
    <property type="entry name" value="Genome polyprotein"/>
    <property type="match status" value="1"/>
</dbReference>
<dbReference type="FunFam" id="2.40.10.120:FF:000008">
    <property type="entry name" value="Genome polyprotein"/>
    <property type="match status" value="1"/>
</dbReference>
<dbReference type="FunFam" id="2.60.260.50:FF:000001">
    <property type="entry name" value="Genome polyprotein"/>
    <property type="match status" value="1"/>
</dbReference>
<dbReference type="FunFam" id="3.30.70.2840:FF:000001">
    <property type="entry name" value="Genome polyprotein"/>
    <property type="match status" value="1"/>
</dbReference>
<dbReference type="FunFam" id="3.30.70.2840:FF:000002">
    <property type="entry name" value="Genome polyprotein"/>
    <property type="match status" value="1"/>
</dbReference>
<dbReference type="FunFam" id="3.30.70.2840:FF:000004">
    <property type="entry name" value="Genome polyprotein"/>
    <property type="match status" value="1"/>
</dbReference>
<dbReference type="FunFam" id="3.40.50.150:FF:000105">
    <property type="entry name" value="Genome polyprotein"/>
    <property type="match status" value="1"/>
</dbReference>
<dbReference type="FunFam" id="3.40.50.300:FF:000763">
    <property type="entry name" value="Genome polyprotein"/>
    <property type="match status" value="1"/>
</dbReference>
<dbReference type="Gene3D" id="1.10.10.930">
    <property type="match status" value="1"/>
</dbReference>
<dbReference type="Gene3D" id="1.10.260.90">
    <property type="match status" value="1"/>
</dbReference>
<dbReference type="Gene3D" id="1.20.1280.260">
    <property type="match status" value="1"/>
</dbReference>
<dbReference type="Gene3D" id="2.40.10.120">
    <property type="match status" value="2"/>
</dbReference>
<dbReference type="Gene3D" id="2.60.40.350">
    <property type="match status" value="1"/>
</dbReference>
<dbReference type="Gene3D" id="1.10.8.970">
    <property type="entry name" value="Flavivirus envelope glycoprotein M-like"/>
    <property type="match status" value="1"/>
</dbReference>
<dbReference type="Gene3D" id="2.60.260.50">
    <property type="entry name" value="Flavivirus polyprotein propeptide domain"/>
    <property type="match status" value="1"/>
</dbReference>
<dbReference type="Gene3D" id="3.30.70.2840">
    <property type="entry name" value="Flavivirus RNA-directed RNA polymerase, thumb domain"/>
    <property type="match status" value="3"/>
</dbReference>
<dbReference type="Gene3D" id="3.40.50.300">
    <property type="entry name" value="P-loop containing nucleotide triphosphate hydrolases"/>
    <property type="match status" value="2"/>
</dbReference>
<dbReference type="Gene3D" id="2.60.98.10">
    <property type="entry name" value="Tick-borne Encephalitis virus Glycoprotein, domain 1"/>
    <property type="match status" value="1"/>
</dbReference>
<dbReference type="Gene3D" id="2.40.10.10">
    <property type="entry name" value="Trypsin-like serine proteases"/>
    <property type="match status" value="1"/>
</dbReference>
<dbReference type="Gene3D" id="3.40.50.150">
    <property type="entry name" value="Vaccinia Virus protein VP39"/>
    <property type="match status" value="1"/>
</dbReference>
<dbReference type="Gene3D" id="3.30.67.10">
    <property type="entry name" value="Viral Envelope Glycoprotein, domain 2"/>
    <property type="match status" value="1"/>
</dbReference>
<dbReference type="Gene3D" id="3.30.387.10">
    <property type="entry name" value="Viral Envelope Glycoprotein, domain 3"/>
    <property type="match status" value="1"/>
</dbReference>
<dbReference type="InterPro" id="IPR043502">
    <property type="entry name" value="DNA/RNA_pol_sf"/>
</dbReference>
<dbReference type="InterPro" id="IPR000069">
    <property type="entry name" value="Env_glycoprot_M_flavivir"/>
</dbReference>
<dbReference type="InterPro" id="IPR038302">
    <property type="entry name" value="Env_glycoprot_M_sf_flavivir"/>
</dbReference>
<dbReference type="InterPro" id="IPR013755">
    <property type="entry name" value="Flav_gly_cen_dom_subdom1"/>
</dbReference>
<dbReference type="InterPro" id="IPR001122">
    <property type="entry name" value="Flavi_capsidC"/>
</dbReference>
<dbReference type="InterPro" id="IPR037172">
    <property type="entry name" value="Flavi_capsidC_sf"/>
</dbReference>
<dbReference type="InterPro" id="IPR011492">
    <property type="entry name" value="Flavi_DEAD"/>
</dbReference>
<dbReference type="InterPro" id="IPR027287">
    <property type="entry name" value="Flavi_E_Ig-like"/>
</dbReference>
<dbReference type="InterPro" id="IPR026470">
    <property type="entry name" value="Flavi_E_Stem/Anchor_dom"/>
</dbReference>
<dbReference type="InterPro" id="IPR038345">
    <property type="entry name" value="Flavi_E_Stem/Anchor_dom_sf"/>
</dbReference>
<dbReference type="InterPro" id="IPR011998">
    <property type="entry name" value="Flavi_Glycoprot_E_cen/dimer"/>
</dbReference>
<dbReference type="InterPro" id="IPR001157">
    <property type="entry name" value="Flavi_NS1"/>
</dbReference>
<dbReference type="InterPro" id="IPR000752">
    <property type="entry name" value="Flavi_NS2A"/>
</dbReference>
<dbReference type="InterPro" id="IPR000487">
    <property type="entry name" value="Flavi_NS2B"/>
</dbReference>
<dbReference type="InterPro" id="IPR001850">
    <property type="entry name" value="Flavi_NS3_S7"/>
</dbReference>
<dbReference type="InterPro" id="IPR000404">
    <property type="entry name" value="Flavi_NS4A"/>
</dbReference>
<dbReference type="InterPro" id="IPR001528">
    <property type="entry name" value="Flavi_NS4B"/>
</dbReference>
<dbReference type="InterPro" id="IPR046811">
    <property type="entry name" value="Flavi_NS5_thumb"/>
</dbReference>
<dbReference type="InterPro" id="IPR002535">
    <property type="entry name" value="Flavi_propep"/>
</dbReference>
<dbReference type="InterPro" id="IPR038688">
    <property type="entry name" value="Flavi_propep_sf"/>
</dbReference>
<dbReference type="InterPro" id="IPR047530">
    <property type="entry name" value="Flavi_RdRp"/>
</dbReference>
<dbReference type="InterPro" id="IPR000208">
    <property type="entry name" value="Flavi_RdRp_fingers/palm"/>
</dbReference>
<dbReference type="InterPro" id="IPR000336">
    <property type="entry name" value="Flavivir/Alphavir_Ig-like_sf"/>
</dbReference>
<dbReference type="InterPro" id="IPR014412">
    <property type="entry name" value="Gen_Poly_FLV"/>
</dbReference>
<dbReference type="InterPro" id="IPR036253">
    <property type="entry name" value="Glycoprot_cen/dimer_sf"/>
</dbReference>
<dbReference type="InterPro" id="IPR038055">
    <property type="entry name" value="Glycoprot_E_dimer_dom"/>
</dbReference>
<dbReference type="InterPro" id="IPR013756">
    <property type="entry name" value="GlyE_cen_dom_subdom2"/>
</dbReference>
<dbReference type="InterPro" id="IPR014001">
    <property type="entry name" value="Helicase_ATP-bd"/>
</dbReference>
<dbReference type="InterPro" id="IPR001650">
    <property type="entry name" value="Helicase_C-like"/>
</dbReference>
<dbReference type="InterPro" id="IPR014756">
    <property type="entry name" value="Ig_E-set"/>
</dbReference>
<dbReference type="InterPro" id="IPR026490">
    <property type="entry name" value="mRNA_cap_0/1_MeTrfase"/>
</dbReference>
<dbReference type="InterPro" id="IPR049486">
    <property type="entry name" value="NS3-hel_C_flaviviridae"/>
</dbReference>
<dbReference type="InterPro" id="IPR027417">
    <property type="entry name" value="P-loop_NTPase"/>
</dbReference>
<dbReference type="InterPro" id="IPR009003">
    <property type="entry name" value="Peptidase_S1_PA"/>
</dbReference>
<dbReference type="InterPro" id="IPR043504">
    <property type="entry name" value="Peptidase_S1_PA_chymotrypsin"/>
</dbReference>
<dbReference type="InterPro" id="IPR007094">
    <property type="entry name" value="RNA-dir_pol_PSvirus"/>
</dbReference>
<dbReference type="InterPro" id="IPR002877">
    <property type="entry name" value="RNA_MeTrfase_FtsJ_dom"/>
</dbReference>
<dbReference type="InterPro" id="IPR029063">
    <property type="entry name" value="SAM-dependent_MTases_sf"/>
</dbReference>
<dbReference type="NCBIfam" id="TIGR04240">
    <property type="entry name" value="flavi_E_stem"/>
    <property type="match status" value="1"/>
</dbReference>
<dbReference type="Pfam" id="PF20907">
    <property type="entry name" value="Flav_NS3-hel_C"/>
    <property type="match status" value="1"/>
</dbReference>
<dbReference type="Pfam" id="PF01003">
    <property type="entry name" value="Flavi_capsid"/>
    <property type="match status" value="1"/>
</dbReference>
<dbReference type="Pfam" id="PF07652">
    <property type="entry name" value="Flavi_DEAD"/>
    <property type="match status" value="1"/>
</dbReference>
<dbReference type="Pfam" id="PF21659">
    <property type="entry name" value="Flavi_E_stem"/>
    <property type="match status" value="1"/>
</dbReference>
<dbReference type="Pfam" id="PF02832">
    <property type="entry name" value="Flavi_glycop_C"/>
    <property type="match status" value="1"/>
</dbReference>
<dbReference type="Pfam" id="PF00869">
    <property type="entry name" value="Flavi_glycoprot"/>
    <property type="match status" value="1"/>
</dbReference>
<dbReference type="Pfam" id="PF01004">
    <property type="entry name" value="Flavi_M"/>
    <property type="match status" value="1"/>
</dbReference>
<dbReference type="Pfam" id="PF00948">
    <property type="entry name" value="Flavi_NS1"/>
    <property type="match status" value="1"/>
</dbReference>
<dbReference type="Pfam" id="PF01005">
    <property type="entry name" value="Flavi_NS2A"/>
    <property type="match status" value="1"/>
</dbReference>
<dbReference type="Pfam" id="PF01002">
    <property type="entry name" value="Flavi_NS2B"/>
    <property type="match status" value="1"/>
</dbReference>
<dbReference type="Pfam" id="PF01350">
    <property type="entry name" value="Flavi_NS4A"/>
    <property type="match status" value="1"/>
</dbReference>
<dbReference type="Pfam" id="PF01349">
    <property type="entry name" value="Flavi_NS4B"/>
    <property type="match status" value="1"/>
</dbReference>
<dbReference type="Pfam" id="PF00972">
    <property type="entry name" value="Flavi_NS5"/>
    <property type="match status" value="1"/>
</dbReference>
<dbReference type="Pfam" id="PF20483">
    <property type="entry name" value="Flavi_NS5_thumb"/>
    <property type="match status" value="1"/>
</dbReference>
<dbReference type="Pfam" id="PF01570">
    <property type="entry name" value="Flavi_propep"/>
    <property type="match status" value="1"/>
</dbReference>
<dbReference type="Pfam" id="PF01728">
    <property type="entry name" value="FtsJ"/>
    <property type="match status" value="1"/>
</dbReference>
<dbReference type="Pfam" id="PF00949">
    <property type="entry name" value="Peptidase_S7"/>
    <property type="match status" value="1"/>
</dbReference>
<dbReference type="PIRSF" id="PIRSF003817">
    <property type="entry name" value="Gen_Poly_FLV"/>
    <property type="match status" value="1"/>
</dbReference>
<dbReference type="SMART" id="SM00487">
    <property type="entry name" value="DEXDc"/>
    <property type="match status" value="1"/>
</dbReference>
<dbReference type="SMART" id="SM00490">
    <property type="entry name" value="HELICc"/>
    <property type="match status" value="1"/>
</dbReference>
<dbReference type="SUPFAM" id="SSF56672">
    <property type="entry name" value="DNA/RNA polymerases"/>
    <property type="match status" value="1"/>
</dbReference>
<dbReference type="SUPFAM" id="SSF81296">
    <property type="entry name" value="E set domains"/>
    <property type="match status" value="1"/>
</dbReference>
<dbReference type="SUPFAM" id="SSF101257">
    <property type="entry name" value="Flavivirus capsid protein C"/>
    <property type="match status" value="1"/>
</dbReference>
<dbReference type="SUPFAM" id="SSF52540">
    <property type="entry name" value="P-loop containing nucleoside triphosphate hydrolases"/>
    <property type="match status" value="2"/>
</dbReference>
<dbReference type="SUPFAM" id="SSF53335">
    <property type="entry name" value="S-adenosyl-L-methionine-dependent methyltransferases"/>
    <property type="match status" value="1"/>
</dbReference>
<dbReference type="SUPFAM" id="SSF50494">
    <property type="entry name" value="Trypsin-like serine proteases"/>
    <property type="match status" value="1"/>
</dbReference>
<dbReference type="SUPFAM" id="SSF56983">
    <property type="entry name" value="Viral glycoprotein, central and dimerisation domains"/>
    <property type="match status" value="1"/>
</dbReference>
<dbReference type="PROSITE" id="PS51527">
    <property type="entry name" value="FLAVIVIRUS_NS2B"/>
    <property type="match status" value="1"/>
</dbReference>
<dbReference type="PROSITE" id="PS51528">
    <property type="entry name" value="FLAVIVIRUS_NS3PRO"/>
    <property type="match status" value="1"/>
</dbReference>
<dbReference type="PROSITE" id="PS51192">
    <property type="entry name" value="HELICASE_ATP_BIND_1"/>
    <property type="match status" value="1"/>
</dbReference>
<dbReference type="PROSITE" id="PS51194">
    <property type="entry name" value="HELICASE_CTER"/>
    <property type="match status" value="1"/>
</dbReference>
<dbReference type="PROSITE" id="PS50507">
    <property type="entry name" value="RDRP_SSRNA_POS"/>
    <property type="match status" value="1"/>
</dbReference>
<dbReference type="PROSITE" id="PS51591">
    <property type="entry name" value="RNA_CAP01_NS5_MT"/>
    <property type="match status" value="1"/>
</dbReference>
<name>POLG_DEN4D</name>
<evidence type="ECO:0000250" key="1">
    <source>
        <dbReference type="UniProtKB" id="P03314"/>
    </source>
</evidence>
<evidence type="ECO:0000250" key="2">
    <source>
        <dbReference type="UniProtKB" id="P14335"/>
    </source>
</evidence>
<evidence type="ECO:0000250" key="3">
    <source>
        <dbReference type="UniProtKB" id="P14336"/>
    </source>
</evidence>
<evidence type="ECO:0000250" key="4">
    <source>
        <dbReference type="UniProtKB" id="P14340"/>
    </source>
</evidence>
<evidence type="ECO:0000250" key="5">
    <source>
        <dbReference type="UniProtKB" id="P17763"/>
    </source>
</evidence>
<evidence type="ECO:0000250" key="6">
    <source>
        <dbReference type="UniProtKB" id="P29990"/>
    </source>
</evidence>
<evidence type="ECO:0000250" key="7">
    <source>
        <dbReference type="UniProtKB" id="P29991"/>
    </source>
</evidence>
<evidence type="ECO:0000250" key="8">
    <source>
        <dbReference type="UniProtKB" id="Q32ZE1"/>
    </source>
</evidence>
<evidence type="ECO:0000250" key="9">
    <source>
        <dbReference type="UniProtKB" id="Q6YMS4"/>
    </source>
</evidence>
<evidence type="ECO:0000250" key="10">
    <source>
        <dbReference type="UniProtKB" id="Q9Q6P4"/>
    </source>
</evidence>
<evidence type="ECO:0000255" key="11"/>
<evidence type="ECO:0000255" key="12">
    <source>
        <dbReference type="PROSITE-ProRule" id="PRU00498"/>
    </source>
</evidence>
<evidence type="ECO:0000255" key="13">
    <source>
        <dbReference type="PROSITE-ProRule" id="PRU00539"/>
    </source>
</evidence>
<evidence type="ECO:0000255" key="14">
    <source>
        <dbReference type="PROSITE-ProRule" id="PRU00541"/>
    </source>
</evidence>
<evidence type="ECO:0000255" key="15">
    <source>
        <dbReference type="PROSITE-ProRule" id="PRU00859"/>
    </source>
</evidence>
<evidence type="ECO:0000255" key="16">
    <source>
        <dbReference type="PROSITE-ProRule" id="PRU00860"/>
    </source>
</evidence>
<evidence type="ECO:0000255" key="17">
    <source>
        <dbReference type="PROSITE-ProRule" id="PRU00924"/>
    </source>
</evidence>
<evidence type="ECO:0000269" key="18">
    <source>
    </source>
</evidence>
<evidence type="ECO:0000269" key="19">
    <source>
    </source>
</evidence>
<evidence type="ECO:0000305" key="20"/>
<evidence type="ECO:0007829" key="21">
    <source>
        <dbReference type="PDB" id="2H0P"/>
    </source>
</evidence>
<evidence type="ECO:0007829" key="22">
    <source>
        <dbReference type="PDB" id="3UAJ"/>
    </source>
</evidence>
<evidence type="ECO:0007829" key="23">
    <source>
        <dbReference type="PDB" id="3WE1"/>
    </source>
</evidence>
<evidence type="ECO:0007829" key="24">
    <source>
        <dbReference type="PDB" id="5B1C"/>
    </source>
</evidence>
<evidence type="ECO:0007829" key="25">
    <source>
        <dbReference type="PDB" id="7A3Q"/>
    </source>
</evidence>
<organismHost>
    <name type="scientific">Aedes aegypti</name>
    <name type="common">Yellowfever mosquito</name>
    <name type="synonym">Culex aegypti</name>
    <dbReference type="NCBI Taxonomy" id="7159"/>
</organismHost>
<organismHost>
    <name type="scientific">Aedes albopictus</name>
    <name type="common">Asian tiger mosquito</name>
    <name type="synonym">Stegomyia albopicta</name>
    <dbReference type="NCBI Taxonomy" id="7160"/>
</organismHost>
<organismHost>
    <name type="scientific">Aedes polynesiensis</name>
    <name type="common">Polynesian tiger mosquito</name>
    <dbReference type="NCBI Taxonomy" id="188700"/>
</organismHost>
<organismHost>
    <name type="scientific">Homo sapiens</name>
    <name type="common">Human</name>
    <dbReference type="NCBI Taxonomy" id="9606"/>
</organismHost>
<keyword id="KW-0002">3D-structure</keyword>
<keyword id="KW-0007">Acetylation</keyword>
<keyword id="KW-1072">Activation of host autophagy by virus</keyword>
<keyword id="KW-0067">ATP-binding</keyword>
<keyword id="KW-0167">Capsid protein</keyword>
<keyword id="KW-1165">Clathrin-mediated endocytosis of virus by host</keyword>
<keyword id="KW-0165">Cleavage on pair of basic residues</keyword>
<keyword id="KW-0903">Direct protein sequencing</keyword>
<keyword id="KW-1015">Disulfide bond</keyword>
<keyword id="KW-1170">Fusion of virus membrane with host endosomal membrane</keyword>
<keyword id="KW-1168">Fusion of virus membrane with host membrane</keyword>
<keyword id="KW-0325">Glycoprotein</keyword>
<keyword id="KW-0347">Helicase</keyword>
<keyword id="KW-1035">Host cytoplasm</keyword>
<keyword id="KW-1038">Host endoplasmic reticulum</keyword>
<keyword id="KW-1043">Host membrane</keyword>
<keyword id="KW-1045">Host mitochondrion</keyword>
<keyword id="KW-1048">Host nucleus</keyword>
<keyword id="KW-0945">Host-virus interaction</keyword>
<keyword id="KW-0378">Hydrolase</keyword>
<keyword id="KW-1090">Inhibition of host innate immune response by virus</keyword>
<keyword id="KW-1114">Inhibition of host interferon signaling pathway by virus</keyword>
<keyword id="KW-1097">Inhibition of host MAVS by virus</keyword>
<keyword id="KW-1113">Inhibition of host RLR pathway by virus</keyword>
<keyword id="KW-1106">Inhibition of host STAT2 by virus</keyword>
<keyword id="KW-1112">Inhibition of host TYK2 by virus</keyword>
<keyword id="KW-0922">Interferon antiviral system evasion</keyword>
<keyword id="KW-0407">Ion channel</keyword>
<keyword id="KW-0406">Ion transport</keyword>
<keyword id="KW-0472">Membrane</keyword>
<keyword id="KW-0479">Metal-binding</keyword>
<keyword id="KW-0489">Methyltransferase</keyword>
<keyword id="KW-0506">mRNA capping</keyword>
<keyword id="KW-0507">mRNA processing</keyword>
<keyword id="KW-0511">Multifunctional enzyme</keyword>
<keyword id="KW-0547">Nucleotide-binding</keyword>
<keyword id="KW-0548">Nucleotidyltransferase</keyword>
<keyword id="KW-0597">Phosphoprotein</keyword>
<keyword id="KW-0645">Protease</keyword>
<keyword id="KW-0694">RNA-binding</keyword>
<keyword id="KW-0696">RNA-directed RNA polymerase</keyword>
<keyword id="KW-0949">S-adenosyl-L-methionine</keyword>
<keyword id="KW-0964">Secreted</keyword>
<keyword id="KW-0720">Serine protease</keyword>
<keyword id="KW-0941">Suppressor of RNA silencing</keyword>
<keyword id="KW-0804">Transcription</keyword>
<keyword id="KW-0805">Transcription regulation</keyword>
<keyword id="KW-0808">Transferase</keyword>
<keyword id="KW-0812">Transmembrane</keyword>
<keyword id="KW-1133">Transmembrane helix</keyword>
<keyword id="KW-0813">Transport</keyword>
<keyword id="KW-0832">Ubl conjugation</keyword>
<keyword id="KW-1161">Viral attachment to host cell</keyword>
<keyword id="KW-0261">Viral envelope protein</keyword>
<keyword id="KW-0899">Viral immunoevasion</keyword>
<keyword id="KW-1182">Viral ion channel</keyword>
<keyword id="KW-1162">Viral penetration into host cytoplasm</keyword>
<keyword id="KW-0693">Viral RNA replication</keyword>
<keyword id="KW-0946">Virion</keyword>
<keyword id="KW-1164">Virus endocytosis by host</keyword>
<keyword id="KW-1160">Virus entry into host cell</keyword>
<keyword id="KW-0862">Zinc</keyword>